<name>POLG_HCVTR</name>
<feature type="initiator methionine" description="Removed; by host" evidence="4">
    <location>
        <position position="1"/>
    </location>
</feature>
<feature type="chain" id="PRO_0000450927" description="Genome polyprotein">
    <location>
        <begin position="2"/>
        <end position="3023"/>
    </location>
</feature>
<feature type="chain" id="PRO_0000045688" description="Core protein precursor" evidence="13">
    <location>
        <begin position="2"/>
        <end position="191"/>
    </location>
</feature>
<feature type="chain" id="PRO_0000045689" description="Mature core protein">
    <location>
        <begin position="2"/>
        <end position="177"/>
    </location>
</feature>
<feature type="propeptide" id="PRO_0000045690" description="ER anchor for the core protein, removed in mature form by host signal peptidase">
    <location>
        <begin position="178"/>
        <end position="191"/>
    </location>
</feature>
<feature type="chain" id="PRO_0000045691" description="Envelope glycoprotein E1">
    <location>
        <begin position="192"/>
        <end position="384"/>
    </location>
</feature>
<feature type="chain" id="PRO_0000045692" description="Envelope glycoprotein E2">
    <location>
        <begin position="385"/>
        <end position="754"/>
    </location>
</feature>
<feature type="chain" id="PRO_0000045693" description="Viroporin p7">
    <location>
        <begin position="755"/>
        <end position="817"/>
    </location>
</feature>
<feature type="chain" id="PRO_0000045694" description="Protease NS2" evidence="17">
    <location>
        <begin position="818"/>
        <end position="1034"/>
    </location>
</feature>
<feature type="chain" id="PRO_0000045695" description="Serine protease/helicase NS3">
    <location>
        <begin position="1035"/>
        <end position="1665"/>
    </location>
</feature>
<feature type="chain" id="PRO_0000045696" description="Non-structural protein 4A">
    <location>
        <begin position="1666"/>
        <end position="1719"/>
    </location>
</feature>
<feature type="chain" id="PRO_0000045697" description="Non-structural protein 4B">
    <location>
        <begin position="1720"/>
        <end position="1980"/>
    </location>
</feature>
<feature type="chain" id="PRO_0000045698" description="Non-structural protein 5A">
    <location>
        <begin position="1981"/>
        <end position="2432"/>
    </location>
</feature>
<feature type="chain" id="PRO_0000045699" description="RNA-directed RNA polymerase">
    <location>
        <begin position="2433"/>
        <end position="3023"/>
    </location>
</feature>
<feature type="topological domain" description="Cytoplasmic" evidence="13">
    <location>
        <begin position="2"/>
        <end position="168"/>
    </location>
</feature>
<feature type="transmembrane region" description="Helical" evidence="13">
    <location>
        <begin position="169"/>
        <end position="189"/>
    </location>
</feature>
<feature type="topological domain" description="Lumenal" evidence="5">
    <location>
        <begin position="190"/>
        <end position="359"/>
    </location>
</feature>
<feature type="transmembrane region" description="Helical" evidence="5">
    <location>
        <begin position="360"/>
        <end position="380"/>
    </location>
</feature>
<feature type="topological domain" description="Lumenal" evidence="5">
    <location>
        <begin position="381"/>
        <end position="733"/>
    </location>
</feature>
<feature type="transmembrane region" description="Helical" evidence="5">
    <location>
        <begin position="734"/>
        <end position="754"/>
    </location>
</feature>
<feature type="topological domain" description="Lumenal" evidence="5">
    <location>
        <begin position="755"/>
        <end position="765"/>
    </location>
</feature>
<feature type="transmembrane region" description="Helical" evidence="5">
    <location>
        <begin position="766"/>
        <end position="786"/>
    </location>
</feature>
<feature type="topological domain" description="Cytoplasmic" evidence="5">
    <location>
        <begin position="787"/>
        <end position="790"/>
    </location>
</feature>
<feature type="transmembrane region" description="Helical" evidence="5">
    <location>
        <begin position="791"/>
        <end position="811"/>
    </location>
</feature>
<feature type="topological domain" description="Lumenal" evidence="5">
    <location>
        <begin position="812"/>
        <end position="821"/>
    </location>
</feature>
<feature type="transmembrane region" description="Helical" evidence="12">
    <location>
        <begin position="822"/>
        <end position="842"/>
    </location>
</feature>
<feature type="topological domain" description="Cytoplasmic" evidence="12">
    <location>
        <begin position="843"/>
        <end position="889"/>
    </location>
</feature>
<feature type="transmembrane region" description="Helical" evidence="12">
    <location>
        <begin position="890"/>
        <end position="910"/>
    </location>
</feature>
<feature type="topological domain" description="Lumenal" evidence="12">
    <location>
        <begin position="911"/>
        <end position="936"/>
    </location>
</feature>
<feature type="transmembrane region" description="Helical" evidence="12">
    <location>
        <begin position="937"/>
        <end position="957"/>
    </location>
</feature>
<feature type="topological domain" description="Cytoplasmic" evidence="12">
    <location>
        <begin position="958"/>
        <end position="1665"/>
    </location>
</feature>
<feature type="transmembrane region" description="Helical" evidence="13">
    <location>
        <begin position="1666"/>
        <end position="1686"/>
    </location>
</feature>
<feature type="topological domain" description="Cytoplasmic" evidence="13">
    <location>
        <begin position="1687"/>
        <end position="1813"/>
    </location>
</feature>
<feature type="transmembrane region" description="Helical" evidence="13">
    <location>
        <begin position="1814"/>
        <end position="1834"/>
    </location>
</feature>
<feature type="topological domain" description="Lumenal" evidence="5">
    <location>
        <begin position="1835"/>
        <end position="1836"/>
    </location>
</feature>
<feature type="transmembrane region" description="Helical" evidence="13">
    <location>
        <begin position="1837"/>
        <end position="1857"/>
    </location>
</feature>
<feature type="topological domain" description="Cytoplasmic" evidence="13">
    <location>
        <position position="1858"/>
    </location>
</feature>
<feature type="transmembrane region" description="Helical" evidence="13">
    <location>
        <begin position="1859"/>
        <end position="1879"/>
    </location>
</feature>
<feature type="topological domain" description="Lumenal" evidence="13">
    <location>
        <begin position="1880"/>
        <end position="1889"/>
    </location>
</feature>
<feature type="transmembrane region" description="Helical" evidence="13">
    <location>
        <begin position="1890"/>
        <end position="1910"/>
    </location>
</feature>
<feature type="topological domain" description="Cytoplasmic" evidence="13">
    <location>
        <begin position="1911"/>
        <end position="1980"/>
    </location>
</feature>
<feature type="intramembrane region" evidence="5">
    <location>
        <begin position="1981"/>
        <end position="2010"/>
    </location>
</feature>
<feature type="topological domain" description="Cytoplasmic" evidence="5">
    <location>
        <begin position="2011"/>
        <end position="3002"/>
    </location>
</feature>
<feature type="transmembrane region" description="Helical" evidence="5">
    <location>
        <begin position="3003"/>
        <end position="3023"/>
    </location>
</feature>
<feature type="domain" description="Peptidase C18" evidence="17">
    <location>
        <begin position="907"/>
        <end position="1034"/>
    </location>
</feature>
<feature type="domain" description="Peptidase S29" evidence="18">
    <location>
        <begin position="1035"/>
        <end position="1216"/>
    </location>
</feature>
<feature type="domain" description="Helicase ATP-binding" evidence="15">
    <location>
        <begin position="1225"/>
        <end position="1377"/>
    </location>
</feature>
<feature type="domain" description="Helicase C-terminal" evidence="16">
    <location>
        <begin position="1387"/>
        <end position="1546"/>
    </location>
</feature>
<feature type="domain" description="RdRp catalytic" evidence="14">
    <location>
        <begin position="2646"/>
        <end position="2764"/>
    </location>
</feature>
<feature type="region of interest" description="Disordered" evidence="5">
    <location>
        <begin position="2"/>
        <end position="75"/>
    </location>
</feature>
<feature type="region of interest" description="Interaction with DDX3X" evidence="9">
    <location>
        <begin position="2"/>
        <end position="59"/>
    </location>
</feature>
<feature type="region of interest" description="Interaction with EIF2AK2/PKR" evidence="2">
    <location>
        <begin position="2"/>
        <end position="58"/>
    </location>
</feature>
<feature type="region of interest" description="Interaction with STAT1" evidence="2">
    <location>
        <begin position="2"/>
        <end position="23"/>
    </location>
</feature>
<feature type="region of interest" description="Important for endoplasmic reticulum and mitochondrial localization" evidence="2">
    <location>
        <begin position="112"/>
        <end position="152"/>
    </location>
</feature>
<feature type="region of interest" description="Interaction with APOA2" evidence="6">
    <location>
        <begin position="122"/>
        <end position="173"/>
    </location>
</feature>
<feature type="region of interest" description="Important for lipid droplets localization" evidence="5">
    <location>
        <begin position="164"/>
        <end position="167"/>
    </location>
</feature>
<feature type="region of interest" description="Important for fusion" evidence="5">
    <location>
        <begin position="266"/>
        <end position="297"/>
    </location>
</feature>
<feature type="region of interest" description="HVR1" evidence="5">
    <location>
        <begin position="386"/>
        <end position="413"/>
    </location>
</feature>
<feature type="region of interest" description="HVR2" evidence="5">
    <location>
        <begin position="476"/>
        <end position="480"/>
    </location>
</feature>
<feature type="region of interest" description="CD81-binding 1" evidence="3">
    <location>
        <begin position="482"/>
        <end position="495"/>
    </location>
</feature>
<feature type="region of interest" description="CD81-binding 2" evidence="3">
    <location>
        <begin position="546"/>
        <end position="553"/>
    </location>
</feature>
<feature type="region of interest" description="PKR/eIF2-alpha phosphorylation homology domain (PePHD)">
    <location>
        <begin position="668"/>
        <end position="679"/>
    </location>
</feature>
<feature type="region of interest" description="Protease NS2-3" evidence="3">
    <location>
        <begin position="912"/>
        <end position="1214"/>
    </location>
</feature>
<feature type="region of interest" description="Interaction with host SCPS1" evidence="11">
    <location>
        <begin position="937"/>
        <end position="957"/>
    </location>
</feature>
<feature type="region of interest" description="RNA-binding" evidence="3">
    <location>
        <begin position="1494"/>
        <end position="1506"/>
    </location>
</feature>
<feature type="region of interest" description="NS3-binding" evidence="5">
    <location>
        <begin position="1687"/>
        <end position="1698"/>
    </location>
</feature>
<feature type="region of interest" description="Transcriptional activation" evidence="13">
    <location>
        <begin position="2128"/>
        <end position="2340"/>
    </location>
</feature>
<feature type="region of interest" description="FKBP8-binding" evidence="2">
    <location>
        <begin position="2128"/>
        <end position="2216"/>
    </location>
</feature>
<feature type="region of interest" description="Interaction with non-structural protein 4A" evidence="2">
    <location>
        <begin position="2143"/>
        <end position="2147"/>
    </location>
</feature>
<feature type="region of interest" description="Disordered" evidence="19">
    <location>
        <begin position="2195"/>
        <end position="2226"/>
    </location>
</feature>
<feature type="region of interest" description="Interaction with host SKP2" evidence="5">
    <location>
        <begin position="2197"/>
        <end position="2450"/>
    </location>
</feature>
<feature type="region of interest" description="Interaction with EIF2AK2/PKR" evidence="3">
    <location>
        <begin position="2218"/>
        <end position="2283"/>
    </location>
</feature>
<feature type="region of interest" description="ISDR" evidence="2">
    <location>
        <begin position="2218"/>
        <end position="2257"/>
    </location>
</feature>
<feature type="region of interest" description="NS4B-binding" evidence="13">
    <location>
        <begin position="2257"/>
        <end position="2314"/>
    </location>
</feature>
<feature type="region of interest" description="V3">
    <location>
        <begin position="2307"/>
        <end position="2385"/>
    </location>
</feature>
<feature type="region of interest" description="Disordered" evidence="19">
    <location>
        <begin position="2320"/>
        <end position="2344"/>
    </location>
</feature>
<feature type="region of interest" description="Disordered" evidence="19">
    <location>
        <begin position="2357"/>
        <end position="2422"/>
    </location>
</feature>
<feature type="short sequence motif" description="Nuclear localization signal" evidence="11">
    <location>
        <begin position="5"/>
        <end position="13"/>
    </location>
</feature>
<feature type="short sequence motif" description="Nuclear localization signal" evidence="11">
    <location>
        <begin position="38"/>
        <end position="43"/>
    </location>
</feature>
<feature type="short sequence motif" description="Nuclear localization signal" evidence="11">
    <location>
        <begin position="58"/>
        <end position="64"/>
    </location>
</feature>
<feature type="short sequence motif" description="Nuclear localization signal" evidence="11">
    <location>
        <begin position="66"/>
        <end position="71"/>
    </location>
</feature>
<feature type="short sequence motif" description="DECH box" evidence="11">
    <location>
        <begin position="1324"/>
        <end position="1327"/>
    </location>
</feature>
<feature type="short sequence motif" description="SH3-binding" evidence="13">
    <location>
        <begin position="2330"/>
        <end position="2333"/>
    </location>
</feature>
<feature type="short sequence motif" description="Nuclear localization signal" evidence="2">
    <location>
        <begin position="2335"/>
        <end position="2343"/>
    </location>
</feature>
<feature type="compositionally biased region" description="Basic residues" evidence="19">
    <location>
        <begin position="1"/>
        <end position="21"/>
    </location>
</feature>
<feature type="compositionally biased region" description="Basic and acidic residues" evidence="19">
    <location>
        <begin position="47"/>
        <end position="57"/>
    </location>
</feature>
<feature type="compositionally biased region" description="Low complexity" evidence="19">
    <location>
        <begin position="2195"/>
        <end position="2218"/>
    </location>
</feature>
<feature type="compositionally biased region" description="Low complexity" evidence="19">
    <location>
        <begin position="2366"/>
        <end position="2384"/>
    </location>
</feature>
<feature type="active site" description="For protease NS2 activity; shared with dimeric partner" evidence="17">
    <location>
        <position position="960"/>
    </location>
</feature>
<feature type="active site" description="For protease NS2 activity; shared with dimeric partner" evidence="17">
    <location>
        <position position="980"/>
    </location>
</feature>
<feature type="active site" description="For protease NS2 activity; shared with dimeric partner" evidence="17">
    <location>
        <position position="1001"/>
    </location>
</feature>
<feature type="active site" description="Charge relay system; for serine protease NS3 activity" evidence="18">
    <location>
        <position position="1091"/>
    </location>
</feature>
<feature type="active site" description="Charge relay system; for serine protease NS3 activity" evidence="18">
    <location>
        <position position="1115"/>
    </location>
</feature>
<feature type="active site" description="Charge relay system; for serine protease NS3 activity" evidence="18">
    <location>
        <position position="1173"/>
    </location>
</feature>
<feature type="binding site" evidence="18">
    <location>
        <position position="1131"/>
    </location>
    <ligand>
        <name>Zn(2+)</name>
        <dbReference type="ChEBI" id="CHEBI:29105"/>
        <label>1</label>
        <note>structural; for NS3 protease activity and NS2/3 auto-cleavage activity</note>
    </ligand>
</feature>
<feature type="binding site" evidence="18">
    <location>
        <position position="1133"/>
    </location>
    <ligand>
        <name>Zn(2+)</name>
        <dbReference type="ChEBI" id="CHEBI:29105"/>
        <label>1</label>
        <note>structural; for NS3 protease activity and NS2/3 auto-cleavage activity</note>
    </ligand>
</feature>
<feature type="binding site" evidence="18">
    <location>
        <position position="1179"/>
    </location>
    <ligand>
        <name>Zn(2+)</name>
        <dbReference type="ChEBI" id="CHEBI:29105"/>
        <label>1</label>
        <note>structural; for NS3 protease activity and NS2/3 auto-cleavage activity</note>
    </ligand>
</feature>
<feature type="binding site" evidence="18">
    <location>
        <position position="1183"/>
    </location>
    <ligand>
        <name>Zn(2+)</name>
        <dbReference type="ChEBI" id="CHEBI:29105"/>
        <label>1</label>
        <note>structural; for NS3 protease activity and NS2/3 auto-cleavage activity</note>
    </ligand>
</feature>
<feature type="binding site" evidence="15">
    <location>
        <begin position="1238"/>
        <end position="1245"/>
    </location>
    <ligand>
        <name>ATP</name>
        <dbReference type="ChEBI" id="CHEBI:30616"/>
    </ligand>
</feature>
<feature type="binding site" evidence="12">
    <location>
        <position position="1245"/>
    </location>
    <ligand>
        <name>Mg(2+)</name>
        <dbReference type="ChEBI" id="CHEBI:18420"/>
        <label>1</label>
        <note>catalytic; for NS3 helicase activity</note>
    </ligand>
</feature>
<feature type="binding site" evidence="12">
    <location>
        <position position="1325"/>
    </location>
    <ligand>
        <name>Mg(2+)</name>
        <dbReference type="ChEBI" id="CHEBI:18420"/>
        <label>1</label>
        <note>catalytic; for NS3 helicase activity</note>
    </ligand>
</feature>
<feature type="binding site" evidence="12">
    <location>
        <position position="2019"/>
    </location>
    <ligand>
        <name>Zn(2+)</name>
        <dbReference type="ChEBI" id="CHEBI:29105"/>
        <label>2</label>
        <note>structural</note>
    </ligand>
</feature>
<feature type="binding site" evidence="12">
    <location>
        <position position="2037"/>
    </location>
    <ligand>
        <name>Zn(2+)</name>
        <dbReference type="ChEBI" id="CHEBI:29105"/>
        <label>2</label>
        <note>structural</note>
    </ligand>
</feature>
<feature type="binding site" evidence="12">
    <location>
        <position position="2039"/>
    </location>
    <ligand>
        <name>Zn(2+)</name>
        <dbReference type="ChEBI" id="CHEBI:29105"/>
        <label>2</label>
        <note>structural</note>
    </ligand>
</feature>
<feature type="binding site" evidence="12">
    <location>
        <position position="2060"/>
    </location>
    <ligand>
        <name>Zn(2+)</name>
        <dbReference type="ChEBI" id="CHEBI:29105"/>
        <label>2</label>
        <note>structural</note>
    </ligand>
</feature>
<feature type="binding site" evidence="3">
    <location>
        <position position="2652"/>
    </location>
    <ligand>
        <name>Mg(2+)</name>
        <dbReference type="ChEBI" id="CHEBI:18420"/>
        <label>2</label>
        <note>catalytic; for RNA-directed RNA polymerase activity</note>
    </ligand>
</feature>
<feature type="binding site" evidence="3">
    <location>
        <position position="2750"/>
    </location>
    <ligand>
        <name>Mg(2+)</name>
        <dbReference type="ChEBI" id="CHEBI:18420"/>
        <label>2</label>
        <note>catalytic; for RNA-directed RNA polymerase activity</note>
    </ligand>
</feature>
<feature type="binding site" evidence="3">
    <location>
        <position position="2751"/>
    </location>
    <ligand>
        <name>Mg(2+)</name>
        <dbReference type="ChEBI" id="CHEBI:18420"/>
        <label>2</label>
        <note>catalytic; for RNA-directed RNA polymerase activity</note>
    </ligand>
</feature>
<feature type="site" description="Cleavage; by host signal peptide peptidase" evidence="2">
    <location>
        <begin position="177"/>
        <end position="178"/>
    </location>
</feature>
<feature type="site" description="Cleavage; by host signal peptidase" evidence="2">
    <location>
        <begin position="191"/>
        <end position="192"/>
    </location>
</feature>
<feature type="site" description="Cleavage; by host signal peptidase" evidence="2">
    <location>
        <begin position="384"/>
        <end position="385"/>
    </location>
</feature>
<feature type="site" description="Cleavage; by host signal peptidase">
    <location>
        <begin position="754"/>
        <end position="755"/>
    </location>
</feature>
<feature type="site" description="Cleavage; by host signal peptidase">
    <location>
        <begin position="817"/>
        <end position="818"/>
    </location>
</feature>
<feature type="site" description="Cleavage; by protease NS2" evidence="17">
    <location>
        <begin position="1034"/>
        <end position="1035"/>
    </location>
</feature>
<feature type="site" description="Cleavage; by serine protease NS3" evidence="5">
    <location>
        <begin position="1665"/>
        <end position="1666"/>
    </location>
</feature>
<feature type="site" description="Cleavage; by serine protease NS3" evidence="5">
    <location>
        <begin position="1719"/>
        <end position="1720"/>
    </location>
</feature>
<feature type="site" description="Cleavage; by serine protease NS3" evidence="5">
    <location>
        <begin position="1980"/>
        <end position="1981"/>
    </location>
</feature>
<feature type="site" description="Cleavage; by serine protease NS3" evidence="5">
    <location>
        <begin position="2432"/>
        <end position="2433"/>
    </location>
</feature>
<feature type="modified residue" description="N-acetylserine; by host" evidence="10">
    <location>
        <position position="2"/>
    </location>
</feature>
<feature type="modified residue" description="Phosphoserine; by host" evidence="7">
    <location>
        <position position="53"/>
    </location>
</feature>
<feature type="modified residue" description="Phosphoserine; by host" evidence="7">
    <location>
        <position position="116"/>
    </location>
</feature>
<feature type="modified residue" description="Phosphoserine; by host" evidence="12">
    <location>
        <position position="2202"/>
    </location>
</feature>
<feature type="modified residue" description="Phosphoserine; by host" evidence="12">
    <location>
        <position position="2205"/>
    </location>
</feature>
<feature type="modified residue" description="Phosphoserine; by host" evidence="12">
    <location>
        <position position="2209"/>
    </location>
</feature>
<feature type="modified residue" description="Phosphoserine; by host" evidence="12">
    <location>
        <position position="2212"/>
    </location>
</feature>
<feature type="modified residue" description="Phosphoserine; by host" evidence="11">
    <location>
        <position position="2215"/>
    </location>
</feature>
<feature type="modified residue" description="Phosphoserine; by host" evidence="11">
    <location>
        <position position="2218"/>
    </location>
</feature>
<feature type="modified residue" description="Phosphoserine; by host" evidence="2">
    <location>
        <position position="2461"/>
    </location>
</feature>
<feature type="modified residue" description="Phosphoserine; by host" evidence="2">
    <location>
        <position position="2474"/>
    </location>
</feature>
<feature type="lipid moiety-binding region" description="S-palmitoyl cysteine; by host" evidence="5">
    <location>
        <position position="930"/>
    </location>
</feature>
<feature type="lipid moiety-binding region" description="S-palmitoyl cysteine; by host" evidence="5">
    <location>
        <position position="1980"/>
    </location>
</feature>
<feature type="glycosylation site" description="N-linked (GlcNAc...) asparagine; by host" evidence="5">
    <location>
        <position position="196"/>
    </location>
</feature>
<feature type="glycosylation site" description="N-linked (GlcNAc...) asparagine; by host" evidence="5">
    <location>
        <position position="209"/>
    </location>
</feature>
<feature type="glycosylation site" description="N-linked (GlcNAc...) asparagine; by host" evidence="5">
    <location>
        <position position="235"/>
    </location>
</feature>
<feature type="glycosylation site" description="N-linked (GlcNAc...) asparagine; by host" evidence="5">
    <location>
        <position position="306"/>
    </location>
</feature>
<feature type="glycosylation site" description="N-linked (GlcNAc...) (high mannose) asparagine; by host" evidence="5">
    <location>
        <position position="418"/>
    </location>
</feature>
<feature type="glycosylation site" description="N-linked (GlcNAc...) (high mannose) asparagine; by host" evidence="5">
    <location>
        <position position="424"/>
    </location>
</feature>
<feature type="glycosylation site" description="N-linked (GlcNAc...) (high mannose) asparagine; by host" evidence="5">
    <location>
        <position position="431"/>
    </location>
</feature>
<feature type="glycosylation site" description="N-linked (GlcNAc...) asparagine; by host" evidence="13">
    <location>
        <position position="449"/>
    </location>
</feature>
<feature type="glycosylation site" description="N-linked (GlcNAc...) asparagine; by host" evidence="13">
    <location>
        <position position="477"/>
    </location>
</feature>
<feature type="glycosylation site" description="N-linked (GlcNAc...) asparagine; by host" evidence="13">
    <location>
        <position position="534"/>
    </location>
</feature>
<feature type="glycosylation site" description="N-linked (GlcNAc...) asparagine; by host" evidence="13">
    <location>
        <position position="558"/>
    </location>
</feature>
<feature type="glycosylation site" description="N-linked (GlcNAc...) (high mannose) asparagine; by host" evidence="5">
    <location>
        <position position="631"/>
    </location>
</feature>
<feature type="glycosylation site" description="N-linked (GlcNAc...) (high mannose) asparagine; by host" evidence="5">
    <location>
        <position position="653"/>
    </location>
</feature>
<feature type="disulfide bond" evidence="5">
    <location>
        <begin position="430"/>
        <end position="554"/>
    </location>
</feature>
<feature type="disulfide bond" evidence="5">
    <location>
        <begin position="453"/>
        <end position="460"/>
    </location>
</feature>
<feature type="disulfide bond" evidence="5">
    <location>
        <begin position="488"/>
        <end position="496"/>
    </location>
</feature>
<feature type="disulfide bond" evidence="5">
    <location>
        <begin position="505"/>
        <end position="510"/>
    </location>
</feature>
<feature type="disulfide bond" evidence="5">
    <location>
        <begin position="566"/>
        <end position="571"/>
    </location>
</feature>
<feature type="disulfide bond" evidence="5">
    <location>
        <begin position="589"/>
        <end position="593"/>
    </location>
</feature>
<feature type="disulfide bond" evidence="5">
    <location>
        <begin position="605"/>
        <end position="628"/>
    </location>
</feature>
<feature type="disulfide bond" evidence="5">
    <location>
        <begin position="615"/>
        <end position="652"/>
    </location>
</feature>
<feature type="disulfide bond" evidence="5">
    <location>
        <begin position="660"/>
        <end position="685"/>
    </location>
</feature>
<organismHost>
    <name type="scientific">Homo sapiens</name>
    <name type="common">Human</name>
    <dbReference type="NCBI Taxonomy" id="9606"/>
</organismHost>
<accession>Q81487</accession>
<evidence type="ECO:0000250" key="1">
    <source>
        <dbReference type="UniProtKB" id="O92972"/>
    </source>
</evidence>
<evidence type="ECO:0000250" key="2">
    <source>
        <dbReference type="UniProtKB" id="P26662"/>
    </source>
</evidence>
<evidence type="ECO:0000250" key="3">
    <source>
        <dbReference type="UniProtKB" id="P26663"/>
    </source>
</evidence>
<evidence type="ECO:0000250" key="4">
    <source>
        <dbReference type="UniProtKB" id="P26664"/>
    </source>
</evidence>
<evidence type="ECO:0000250" key="5">
    <source>
        <dbReference type="UniProtKB" id="P27958"/>
    </source>
</evidence>
<evidence type="ECO:0000250" key="6">
    <source>
        <dbReference type="UniProtKB" id="P29846"/>
    </source>
</evidence>
<evidence type="ECO:0000250" key="7">
    <source>
        <dbReference type="UniProtKB" id="Q01403"/>
    </source>
</evidence>
<evidence type="ECO:0000250" key="8">
    <source>
        <dbReference type="UniProtKB" id="Q03463"/>
    </source>
</evidence>
<evidence type="ECO:0000250" key="9">
    <source>
        <dbReference type="UniProtKB" id="Q5EG65"/>
    </source>
</evidence>
<evidence type="ECO:0000250" key="10">
    <source>
        <dbReference type="UniProtKB" id="Q913V3"/>
    </source>
</evidence>
<evidence type="ECO:0000250" key="11">
    <source>
        <dbReference type="UniProtKB" id="Q99IB8"/>
    </source>
</evidence>
<evidence type="ECO:0000250" key="12">
    <source>
        <dbReference type="UniProtKB" id="Q9WMX2"/>
    </source>
</evidence>
<evidence type="ECO:0000255" key="13"/>
<evidence type="ECO:0000255" key="14">
    <source>
        <dbReference type="PROSITE-ProRule" id="PRU00539"/>
    </source>
</evidence>
<evidence type="ECO:0000255" key="15">
    <source>
        <dbReference type="PROSITE-ProRule" id="PRU00541"/>
    </source>
</evidence>
<evidence type="ECO:0000255" key="16">
    <source>
        <dbReference type="PROSITE-ProRule" id="PRU00542"/>
    </source>
</evidence>
<evidence type="ECO:0000255" key="17">
    <source>
        <dbReference type="PROSITE-ProRule" id="PRU01030"/>
    </source>
</evidence>
<evidence type="ECO:0000255" key="18">
    <source>
        <dbReference type="PROSITE-ProRule" id="PRU01166"/>
    </source>
</evidence>
<evidence type="ECO:0000256" key="19">
    <source>
        <dbReference type="SAM" id="MobiDB-lite"/>
    </source>
</evidence>
<evidence type="ECO:0000305" key="20"/>
<sequence>MSTLPKPKRQTKRNTLRRPKNVKFPAGGQIVGEVYVLPRRGPQLGVREVRKTSERSQPRGRRQPTPKARPREGRSWAQPGYPWPLYGNEGCGWAGWLLPPRGSRPSWGQNDPRRRSRNLGKVIDTLTCGFADLMGYIPLIGAPVGGVARALAHGVRALEDGVNYATGNLPGCSFSIFLLALFSCLTCPASSLEYRNASGLYLLTNDCSNRSIVYEADDVILHLPGCVPCVETDNNNTSCWTPISPTVAVKHPGVTTASIRNHVNMLVAPPTLCSALYVEDAFGAVSLVGQAFTFRPRQHKTVQTCNCSIYPGHVSGHRMAWDMMMNWSPAIGLVISHLMRLPQTFFDLVVGAHWGVMAGLAYFSMQGNWAKVVIVLIMFSGVDATTHTTGGSAAQATAGFTSFFTRGPSQNLQLVNSNGSWHINSTALNCNDSLNTGFIAGLFYYHKFNSSGCPERMSSCKPITYFNQGWGPLTDANINGPSEDRPYCWHYPPRPCNITKPLNVCGPVYCFTPSPVVVGTTDIKGLPTYRFGVNESDVFLLTSLRPPQGRWFGCVWMNSTGFVKTCGAPPCNIYGGMKDIEANQTHLKCPTDCFRKHHDATFTRCGSGPWLTPRCLVDYPYRLWHYPCTVNFSIFKVRMFVGGHEHRFSAACNWTRGERCDLEDRDRSEQQPLLHSTTDSLILPCSFTPMRRLSTGLIHLHQNIVDVQYLYGVGSAVVGWALKWEFVVLVFLLLADARVCVALWMMLLISQAEAAMENLVMLNALSAAGQQGYVWYLVAFCAAWHIRGKLVPLITYGLTGLWPLALLDLLLPQRAYAWTGEDDATIGAGVLLLLGFFTLSPWYKHWIGRLIWWNQYAICRGEAALQVWVPPLLVRGSRDSVILLASLLYPSLIFDITKLLIAVLGPLYLIQAALTSTPYFVRAHVLIRICMLVRSAMGGKYVQMAVLTVGRWFNTYLYDHLSPIQDWAAEGLKGLAVATEPVIFSPMEIKVITWGADTAACGDILCGLPVSARLGRELLLGPADDYKKMGWRLLSPISAYAQQTRGLFGTIVTSLTGRDKNVVTGEVQVLSTATQTFLGTTVGGVMWTVYHGAGSRTLAGNKRPALQMYTNVDQDLVGWPAPAGTKSLDPCTCGSSDLYLVTREADVLPARRRGDSTASLLSTRPLSCLKGSSGGPVMCPSGHVVGIFRAAVCTRGVAKALQFIPVETLSTQVRSPSFSDNSTPPAVPESYQVGYLHAPTGSGKSTKVPAAYVAQGYSVLVLNPSVAATLGFGTYMSKAYGIDPNIRTGTRTITTGAKLTYSTYGKFLADGGCSGGAYDVIICDECHAQDATSILGIGTVLDQAETAGVRLTVLATATPPGSITVPHPNIEEVGLTSDGEIPFYGKALPLAMIKGGRHLVFCHSKEKCDELASKLRGMGVNAVAFYRGLDVSVIPVSGDVVVCATDALMTGYTGDFDTVIDCNVAVEQYVDFSLDPTFSIETRTVPQDAVSRSQRRGRTGRGRPGIYRFVTPGERPSGMFDSVVLCECYDAGCSWYDLQPAETTVRLRAYLSTPGLPVCQDHLDFWERVFTGLTHIDAHFLSQAKQQGLNFAYLVAYQATVCARAKASPPCWDEMWKCLIRLKPTLQGPTPLLYRLGAIQNDICMTHPITKYIMACMSADLEVTTSAWVLVGGVLAALAAYCLSVGCVVIVGHIELGGKPALVPDRQVLYQQYDEMEECSQSAPYIEQAQAIAQQFKDKVLGLLQRASQQEAEIRPIVQSQWQKAEAFWQQHMWNFVSGIQYLAGLSTLPGNPAVASLMAFTASVTSPLTTNQTMFFNILGGWVATHLAGPAASSAFVVSGLAGAAVGGIGIGRVLLDVLAGYGAGVSGALVAFKIMGGELPTTEDMVNLLPAILSPGALVVGVICAAVLRRHVGPGEGAVQWMNRLIAFASRGNHVSPTHYVPESDAAAKVTALLSSLTVTRLLRRLHQWINEDYPSPCNGDWLHDIWDWVCIVLSDFKTWLSAKIMPKVPGIPFLSCQKGYKGVWRGDGVMTTRCPCGEDFTGHVRNGSMRIAGSGLCANMWHGTFPINEYTTGPSTPVPAHNYSRALWRVTSDSYVEVRRVGDTHYVVGATNDGLKIPCQVPAPEFFTELDGVRLHRYAPPCKPLLRDEITFSVGLHSYANGSQLSCEPEPDVAVLTSMLRDPAHITAATAARRLARGSPPSEASSSASQLSAPSLKATCQTHRPHPDAELIDANLLWRQEMGSNITRVESETKVVILDSFEPLRAEEDDTELSIPAECFKKPPKYPPALPIWARPDYNPPLLPSWKDPTYEPPAVHGCALPPTRPAPVPPPRRKRTIKLDGSNVSAALLALAERSFPSTKPEGTGTSSSGVGTESTAESGDSPETGEESDVESYSSMPPLEGEPGDPDLDADSWSTVSDSEEQSVVCCSMSYSWTGAIITPCSAEEEKLPISPLSNSLLRHHNLVYSTSSRSAAARQKKVTFDRLQVLDDHYKNVLKEVKERASGVKGRLLSFEEACSLVPPHSGRSKYGYSAKDVRSLSSKAMNQIRSVWEDLLEDNSTPIPTTIMAKNEVFSVNPAKGGRKPARLIVYPDLGVRVCEKRALYDVIQKLSIATMGPAYGFQYSPKQRVEHLLKMWTSKKTPLGFSYDTRCFDSTVTEHDIRTEEGIYQCCDLEPEARKAISALTERLYIGGPMYNSKGLQCGYRRCRASGVLPTSFGNTITCYIKATAASRAAGLKNPSFLVCGDDLVVISESCGVEEDRTALRAFTEAMTRYSAPPGDAPQPTYDLELISSCSSNVSVACDGAGKRYYYLTRDPETPLARAAWETARHTPVNSWLGNIIMFAPTIWVRMVLITHFFSILQAQEQLERALDFEMYGATYSVTPLDLPAIIERLHGLSAFSLHGYSPTELNRVAGALRKLGIPPLRAWRHRARAVRAKLIAQGGKARICGLYLFNWAVRTKTKLTPLPTAGQLDLSSWFTVGVGGNDIYHSVSRARTRHLLLCLLLLTVGVGIFLLPAR</sequence>
<proteinExistence type="inferred from homology"/>
<organism>
    <name type="scientific">Hepatitis C virus genotype 3b (isolate Tr-Kj)</name>
    <name type="common">HCV</name>
    <dbReference type="NCBI Taxonomy" id="357355"/>
    <lineage>
        <taxon>Viruses</taxon>
        <taxon>Riboviria</taxon>
        <taxon>Orthornavirae</taxon>
        <taxon>Kitrinoviricota</taxon>
        <taxon>Flasuviricetes</taxon>
        <taxon>Amarillovirales</taxon>
        <taxon>Flaviviridae</taxon>
        <taxon>Hepacivirus</taxon>
        <taxon>Hepacivirus hominis</taxon>
    </lineage>
</organism>
<comment type="function">
    <molecule>Mature core protein</molecule>
    <text evidence="2 4 5 6 11 20">Packages viral RNA to form a viral nucleocapsid, and promotes virion budding (Probable). Participates in the viral particle production as a result of its interaction with the non-structural protein 5A (By similarity). Binds RNA and may function as a RNA chaperone to induce the RNA structural rearrangements taking place during virus replication (By similarity). Modulates viral translation initiation by interacting with viral IRES and 40S ribosomal subunit (By similarity). Affects various cell signaling pathways, host immunity and lipid metabolism (Probable). Prevents the establishment of cellular antiviral state by blocking the interferon-alpha/beta (IFN-alpha/beta) and IFN-gamma signaling pathways and by blocking the formation of phosphorylated STAT1 and promoting ubiquitin-mediated proteasome-dependent degradation of STAT1 (By similarity). Activates STAT3 leading to cellular transformation (By similarity). Regulates the activity of cellular genes, including c-myc and c-fos (By similarity). May repress the promoter of p53, and sequester CREB3 and SP110 isoform 3/Sp110b in the cytoplasm (By similarity). Represses cell cycle negative regulating factor CDKN1A, thereby interrupting an important check point of normal cell cycle regulation (By similarity). Targets transcription factors involved in the regulation of inflammatory responses and in the immune response: suppresses TNF-induced NF-kappa-B activation, and activates AP-1 (By similarity). Binds to dendritic cells (DCs) via C1QR1, resulting in down-regulation of T-lymphocytes proliferation (By similarity). Alters lipid metabolism by interacting with hepatocellular proteins involved in lipid accumulation and storage (By similarity). Induces up-regulation of FAS promoter activity, and thereby contributes to the increased triglyceride accumulation in hepatocytes (steatosis) (By similarity).</text>
</comment>
<comment type="function">
    <molecule>Envelope glycoprotein E1</molecule>
    <text evidence="5">Forms a heterodimer with envelope glycoprotein E2, which mediates virus attachment to the host cell, virion internalization through clathrin-dependent endocytosis and fusion with host membrane (By similarity). Fusion with the host cell is most likely mediated by both E1 and E2, through conformational rearrangements of the heterodimer required for fusion rather than a classical class II fusion mechanism (By similarity). E1/E2 heterodimer binds host apolipoproteins such as APOB and ApoE thereby forming a lipo-viro-particle (LVP) (By similarity). APOE associated to the LVP allows the initial virus attachment to cell surface receptors such as the heparan sulfate proteoglycans (HSPGs), syndecan-1 (SDC1), syndecan-1 (SDC2), the low-density lipoprotein receptor (LDLR) and scavenger receptor class B type I (SCARB1) (By similarity). The cholesterol transfer activity of SCARB1 allows E2 exposure and binding of E2 to SCARB1 and the tetraspanin CD81 (By similarity). E1/E2 heterodimer binding on CD81 activates the epithelial growth factor receptor (EGFR) signaling pathway (By similarity). Diffusion of the complex E1-E2-EGFR-SCARB1-CD81 to the cell lateral membrane allows further interaction with Claudin 1 (CLDN1) and occludin (OCLN) to finally trigger HCV entry (By similarity).</text>
</comment>
<comment type="function">
    <molecule>Envelope glycoprotein E2</molecule>
    <text evidence="4 5">Forms a heterodimer with envelope glycoprotein E1, which mediates virus attachment to the host cell, virion internalization through clathrin-dependent endocytosis and fusion with host membrane (By similarity). Fusion with the host cell is most likely mediated by both E1 and E2, through conformational rearrangements of the heterodimer required for fusion rather than a classical class II fusion mechanism (By similarity). The interaction between envelope glycoprotein E2 and host apolipoprotein E/APOE allows the proper assembly, maturation and infectivity of the viral particles (By similarity). This interaction is probably promoted via the up-regulation of cellular autophagy by the virus (By similarity). E1/E2 heterodimer binds host apolipoproteins such as APOB and APOE thereby forming a lipo-viro-particle (LVP) (By similarity). APOE associated to the LVP allows the initial virus attachment to cell surface receptors such as the heparan sulfate proteoglycans (HSPGs), syndecan-1 (SDC1), syndecan-1 (SDC2), the low-density lipoprotein receptor (LDLR) and scavenger receptor class B type I (SCARB1) (By similarity). The cholesterol transfer activity of SCARB1 allows E2 exposure and binding of E2 to SCARB1 and the tetraspanin CD81 (By similarity). E1/E2 heterodimer binding on CD81 activates the epithelial growth factor receptor (EGFR) signaling pathway (By similarity). Diffusion of the complex E1-E2-EGFR-SCARB1-CD81 to the cell lateral membrane allows further interaction with Claudin 1 (CLDN1) and occludin (OCLN) to finally trigger HCV entry (By similarity). Inhibits host EIF2AK2/PKR activation, preventing the establishment of an antiviral state (By similarity). Viral ligand for CD209/DC-SIGN and CLEC4M/DC-SIGNR, which are respectively found on dendritic cells (DCs), and on liver sinusoidal endothelial cells and macrophage-like cells of lymph node sinuses (By similarity). These interactions allow the capture of circulating HCV particles by these cells and subsequent facilitated transmission to permissive cells such as hepatocytes and lymphocyte subpopulations (By similarity). The interaction between E2 and host amino acid transporter complex formed by SLC3A2 and SLC7A5/LAT1 may facilitate viral entry into host cell (By similarity).</text>
</comment>
<comment type="function">
    <molecule>Viroporin p7</molecule>
    <text evidence="5 11 20">Ion channel protein that acts as a viroporin and plays an essential role in the assembly, envelopment and secretion of viral particles (By similarity). Regulates the host cell secretory pathway, which induces the intracellular retention of viral glycoproteins and favors assembly of viral particles (By similarity). Creates a pore in acidic organelles and releases Ca(2+) and H(+) in the cytoplasm of infected cells, leading to a productive viral infection (By similarity). High levels of cytoplasmic Ca(2+) may trigger membrane trafficking and transport of viral ER-associated proteins to viroplasms, sites of viral genome replication (Probable). This ionic imbalance induces the assembly of the inflammasome complex, which triggers the maturation of pro-IL-1beta into IL-1beta through the action of caspase-1 (By similarity). Targets also host mitochondria and induces mitochondrial depolarization (By similarity). In addition of its role as a viroporin, acts as a lipid raft adhesion factor (By similarity).</text>
</comment>
<comment type="function">
    <molecule>Protease NS2</molecule>
    <text evidence="3 5">Cysteine protease required for the proteolytic auto-cleavage between the non-structural proteins NS2 and NS3 (By similarity). The N-terminus of NS3 is required for the function of NS2 protease (active region NS2-3) (By similarity). Promotes the initiation of viral particle assembly by mediating the interaction between structural and non-structural proteins (By similarity).</text>
</comment>
<comment type="function">
    <molecule>Serine protease/helicase NS3</molecule>
    <text evidence="5 12">Displays three enzymatic activities: serine protease with a chymotrypsin-like fold, NTPase and RNA helicase (By similarity). NS3 serine protease, in association with NS4A, is responsible for the cleavages of NS3-NS4A, NS4A-NS4B, NS4B-NS5A and NS5A-NS5B (By similarity). The NS3/NS4A complex prevents phosphorylation of host IRF3, thus preventing the establishment of dsRNA induced antiviral state (By similarity). The NS3/NS4A complex induces host amino acid transporter component SLC3A2, thus contributing to HCV propagation (By similarity). NS3 RNA helicase binds to RNA and unwinds both dsDNA and dsRNA in the 3' to 5' direction, and likely resolves RNA complicated stable secondary structures in the template strand (By similarity). Binds a single ATP and catalyzes the unzipping of a single base pair of dsRNA (By similarity). Inhibits host antiviral proteins TBK1 and IRF3 thereby preventing the establishment of an antiviral state (By similarity). Cleaves host MAVS/CARDIF thereby preventing the establishment of an antiviral state (By similarity). Cleaves host TICAM1/TRIF, thereby disrupting TLR3 signaling and preventing the establishment of an antiviral state (By similarity).</text>
</comment>
<comment type="function">
    <molecule>Non-structural protein 4A</molecule>
    <text evidence="5 12">Peptide cofactor which forms a non-covalent complex with the N-terminal of NS3 serine protease (By similarity). The NS3/NS4A complex prevents phosphorylation of host IRF3, thus preventing the establishment of dsRNA induced antiviral state (By similarity). The NS3/NS4A complex induces host amino acid transporter component SLC3A2, thus contributing to HCV propagation (By similarity).</text>
</comment>
<comment type="function">
    <molecule>Non-structural protein 4B</molecule>
    <text evidence="5">Induces a specific membrane alteration that serves as a scaffold for the virus replication complex (By similarity). This membrane alteration gives rise to the so-called ER-derived membranous web that contains the replication complex (By similarity). NS4B self-interaction contributes to its function in membranous web formation (By similarity). Promotes host TRIF protein degradation in a CASP8-dependent manner thereby inhibiting host TLR3-mediated interferon signaling (By similarity). Disrupts the interaction between STING and TBK1 contributing to the inhibition of interferon signaling (By similarity).</text>
</comment>
<comment type="function">
    <molecule>Non-structural protein 5A</molecule>
    <text evidence="2 4 5 11 12">Phosphorylated protein that is indispensable for viral replication and assembly (By similarity). Both hypo- and hyperphosphorylated states are required for the viral life cycle (By similarity). The hyperphosphorylated form of NS5A is an inhibitor of viral replication (By similarity). Involved in RNA-binding and especially in binding to the viral genome (By similarity). Zinc is essential for RNA-binding (By similarity). Participates in the viral particle production as a result of its interaction with the mature viral core protein (By similarity). Its interaction with host VAPB may target the viral replication complex to vesicles (By similarity). Down-regulates viral IRES translation initiation (By similarity). Mediates interferon resistance, presumably by interacting with and inhibiting host EIF2AK2/PKR (By similarity). Prevents BIN1-induced apoptosis (By similarity). Acts as a transcriptional activator of some host genes important for viral replication when localized in the nucleus (By similarity). Via the interaction with host PACSIN2, modulates lipid droplet formation in order to promote virion assembly (By similarity). Modulates TNFRSF21/DR6 signaling pathway for viral propagation (By similarity).</text>
</comment>
<comment type="function">
    <molecule>RNA-directed RNA polymerase</molecule>
    <text evidence="5">RNA-dependent RNA polymerase that performs primer-template recognition and RNA synthesis during viral replication. Initiates RNA transcription/replication at a flavin adenine dinucleotide (FAD), resulting in a 5'- FAD cap on viral RNAs. In this way, recognition of viral 5' RNA by host pattern recognition receptors can be bypassed, thereby evading activation of antiviral pathways.</text>
</comment>
<comment type="catalytic activity">
    <molecule>Serine protease/helicase NS3</molecule>
    <reaction evidence="5">
        <text>Hydrolysis of four peptide bonds in the viral precursor polyprotein, commonly with Asp or Glu in the P6 position, Cys or Thr in P1 and Ser or Ala in P1'.</text>
        <dbReference type="EC" id="3.4.21.98"/>
    </reaction>
</comment>
<comment type="catalytic activity">
    <molecule>Serine protease/helicase NS3</molecule>
    <reaction evidence="5">
        <text>a ribonucleoside 5'-triphosphate + H2O = a ribonucleoside 5'-diphosphate + phosphate + H(+)</text>
        <dbReference type="Rhea" id="RHEA:23680"/>
        <dbReference type="ChEBI" id="CHEBI:15377"/>
        <dbReference type="ChEBI" id="CHEBI:15378"/>
        <dbReference type="ChEBI" id="CHEBI:43474"/>
        <dbReference type="ChEBI" id="CHEBI:57930"/>
        <dbReference type="ChEBI" id="CHEBI:61557"/>
        <dbReference type="EC" id="3.6.1.15"/>
    </reaction>
</comment>
<comment type="catalytic activity">
    <molecule>Serine protease/helicase NS3</molecule>
    <reaction evidence="5">
        <text>ATP + H2O = ADP + phosphate + H(+)</text>
        <dbReference type="Rhea" id="RHEA:13065"/>
        <dbReference type="ChEBI" id="CHEBI:15377"/>
        <dbReference type="ChEBI" id="CHEBI:15378"/>
        <dbReference type="ChEBI" id="CHEBI:30616"/>
        <dbReference type="ChEBI" id="CHEBI:43474"/>
        <dbReference type="ChEBI" id="CHEBI:456216"/>
        <dbReference type="EC" id="3.6.4.13"/>
    </reaction>
</comment>
<comment type="catalytic activity">
    <molecule>RNA-directed RNA polymerase</molecule>
    <reaction evidence="14">
        <text>RNA(n) + a ribonucleoside 5'-triphosphate = RNA(n+1) + diphosphate</text>
        <dbReference type="Rhea" id="RHEA:21248"/>
        <dbReference type="Rhea" id="RHEA-COMP:14527"/>
        <dbReference type="Rhea" id="RHEA-COMP:17342"/>
        <dbReference type="ChEBI" id="CHEBI:33019"/>
        <dbReference type="ChEBI" id="CHEBI:61557"/>
        <dbReference type="ChEBI" id="CHEBI:140395"/>
        <dbReference type="EC" id="2.7.7.48"/>
    </reaction>
</comment>
<comment type="cofactor">
    <molecule>Protease NS2</molecule>
    <cofactor evidence="3">
        <name>Zn(2+)</name>
        <dbReference type="ChEBI" id="CHEBI:29105"/>
    </cofactor>
    <text evidence="3">Activity of protease NS2 is dependent on zinc ions and completely inhibited by EDTA. This is probably due to the fact that NS2 protease activity needs NS3 N-terminus that binds a zinc atom (active region NS2-3).</text>
</comment>
<comment type="cofactor">
    <molecule>Serine protease/helicase NS3</molecule>
    <cofactor evidence="3">
        <name>Zn(2+)</name>
        <dbReference type="ChEBI" id="CHEBI:29105"/>
    </cofactor>
    <cofactor evidence="12">
        <name>Mg(2+)</name>
        <dbReference type="ChEBI" id="CHEBI:18420"/>
    </cofactor>
    <text evidence="3 12">Binds 1 zinc ion, which has a structural role (By similarity). The magnesium ion is essential for the helicase activity (By similarity).</text>
</comment>
<comment type="cofactor">
    <molecule>RNA-directed RNA polymerase</molecule>
    <cofactor evidence="3">
        <name>Mg(2+)</name>
        <dbReference type="ChEBI" id="CHEBI:18420"/>
    </cofactor>
    <text evidence="3">Binds 2 magnesium ion that constitute a dinuclear catalytic metal center.</text>
</comment>
<comment type="activity regulation">
    <molecule>Viroporin p7</molecule>
    <text evidence="2 5">Inhibited by the antiviral drug hexamethylene amiloride (By similarity). Inhibition by amantadine appears to be genotype-dependent (By similarity). Also inhibited by long-alkyl-chain iminosugar derivatives (By similarity).</text>
</comment>
<comment type="activity regulation">
    <molecule>RNA-directed RNA polymerase</molecule>
    <text evidence="5">Activity is up-regulated by PRK2/PKN2-mediated phosphorylation.</text>
</comment>
<comment type="subunit">
    <molecule>Mature core protein</molecule>
    <text evidence="2 4 5 6 8 9 11">Homooligomer (By similarity). Interacts with E1 (via C-terminus) (By similarity). Interacts with the non-structural protein 5A (By similarity). Interacts (via N-terminus) with host STAT1 (via SH2 domain); this interaction results in decreased STAT1 phosphorylation and ubiquitin-mediated proteasome-dependent STAT1 degradation, leading to decreased IFN-stimulated gene transcription (By similarity). Interacts with host STAT3; this interaction constitutively activates STAT3 (By similarity). Interacts with host LTBR receptor (By similarity). Interacts with host TNFRSF1A receptor and possibly induces apoptosis (By similarity). Interacts with host HNRPK (By similarity). Interacts with host YWHAE (By similarity). Interacts with host UBE3A/E6AP (By similarity). Interacts with host DDX3X (By similarity). Interacts with host APOA2 (By similarity). Interacts with host RXRA protein (By similarity). Interacts with host SP110 isoform 3/Sp110b; this interaction sequesters the transcriptional corepressor SP110 away from the nucleus (By similarity). Interacts with host CREB3 nuclear transcription protein; this interaction triggers cell transformation (By similarity). Interacts with host ACY3 (By similarity). Interacts with host C1QR1 (By similarity). Interacts with host RBM24; this interaction, which enhances the interaction of the mature core protein with 5'-UTR, may inhibit viral translation and favor replication (By similarity). Interacts with host EIF2AK2/PKR; this interaction induces the autophosphorylation of EIF2AK2 (By similarity). Part of the viral assembly initiation complex composed of NS2, E1, E2, NS3, NS4A, NS5A and the mature core protein (By similarity).</text>
</comment>
<comment type="subunit">
    <molecule>Envelope glycoprotein E1</molecule>
    <text evidence="5 11">Forms a heterodimer with envelope glycoprotein E2 (By similarity). Interacts with mature core protein (By similarity). Interacts with protease NS2 (By similarity). The heterodimer E1/E2 interacts with host CLDN1; this interaction plays a role in viral entry into host cell (By similarity). Interacts with host SPSB2 (via C-terminus) (By similarity). Part of the viral assembly initiation complex composed of NS2, E1, E2, NS3, NS4A, NS5A and the mature core protein (By similarity). Interacts with host NEURL3; this interaction prevents E1 binding to glycoprotein E2 (By similarity).</text>
</comment>
<comment type="subunit">
    <molecule>Envelope glycoprotein E2</molecule>
    <text evidence="5 11 12">Forms a heterodimer with envelope glycoprotein E1 (By similarity). Interacts with host CD81 and SCARB1 receptors; these interactions play a role in viral entry into host cell (By similarity). Interacts with host EIF2AK2/PKR; this interaction inhibits EIF2AK2 and probably allows the virus to evade the innate immune response (By similarity). Interacts with host CD209/DC-SIGN and CLEC4M/DC-SIGNR (By similarity). Interact with host SPCS1; this interaction is essential for viral particle assembly (By similarity). Interacts with protease NS2 (By similarity). The heterodimer E1/E2 interacts with host CLDN1; this interaction plays a role in viral entry into host cell (By similarity). Part of the viral assembly initiation complex composed of NS2, E1, E2, NS3, NS4A, NS5A and the mature core protein (By similarity). Interacts with host SLC3A2/4F2hc; the interaction may facilitate viral entry into host cell (By similarity). Interacts with human PLSCR1 (By similarity).</text>
</comment>
<comment type="subunit">
    <molecule>Viroporin p7</molecule>
    <text evidence="1 5 11">Homohexamer (By similarity). Homoheptamer (By similarity). Interacts with protease NS2 (By similarity).</text>
</comment>
<comment type="subunit">
    <molecule>Protease NS2</molecule>
    <text evidence="5 11">Homodimer (By similarity). Interacts with host SPCS1; this interaction is essential for viral particle assembly (By similarity). Interacts with envelope glycoprotein E1 (By similarity). Interacts with envelope glycoprotein E2 (By similarity). Interacts with viroporin p7 (By similarity). Interacts with serine protease/helicase NS3 (By similarity). Part of the replication complex composed of NS2, NS3, NS4A, NS4B, NS5A and the RNA-directed RNA polymerase embedded in an ER-derived membranous web (By similarity). Part of the viral assembly initiation complex composed of NS2, E1, E2, NS3, NS4A, NS5A and the mature core protein (By similarity).</text>
</comment>
<comment type="subunit">
    <molecule>Serine protease/helicase NS3</molecule>
    <text evidence="3 5 11 12">Interacts with protease NS2 (By similarity). Interacts with non-structural protein 4A; this interaction stabilizes the folding of NS3 serine protease (By similarity). NS3-NS4A interaction is essential for NS3 activation and allows membrane anchorage of the latter (By similarity). NS3/NS4A complex also prevents phosphorylation of host IRF3, thus preventing the establishment of dsRNA induced antiviral state (By similarity). Interacts with host MAVS; this interaction leads to the cleavage and inhibition of host MAVS (By similarity). Interacts with host TICAM1; this interaction leads to the cleavage and inhibition of host TICAM1 (By similarity). Interacts with host TANK-binding kinase/TBK1; this interaction results in the inhibition of the association between TBK1 and IRF3, which leads to the inhibition of IRF3 activation (By similarity). Interacts with host RBM24 (By similarity). Part of the replication complex composed of NS2, NS3, NS4A, NS4B, NS5A and the RNA-directed RNA polymerase embedded in an ER-derived membranous web (By similarity). Part of the viral assembly initiation complex composed of NS2, E1, E2, NS3, NS4A, NS5A and the mature core protein (By similarity).</text>
</comment>
<comment type="subunit">
    <molecule>Non-structural protein 4A</molecule>
    <text evidence="2 3 5 11">Interacts with NS3 serine protease; this interaction stabilizes the folding of NS3 serine protease (By similarity). NS3-NS4A interaction is essential for NS3 activation and allows membrane anchorage of the latter (By similarity). Interacts with non-structural protein 5A (via N-terminus) (By similarity). Part of the replication complex composed of NS2, NS3, NS4A, NS4B, NS5A and the RNA-directed RNA polymerase embedded in an ER-derived membranous web (By similarity). Part of the viral assembly initiation complex composed of NS2, E1, E2, NS3, NS4A, NS5A and the mature core protein (By similarity).</text>
</comment>
<comment type="subunit">
    <molecule>Non-structural protein 4B</molecule>
    <text evidence="5 11">Homomultimer (By similarity). Interacts with non-structural protein NS5A (By similarity). Interacts with host PLA2G4C; this interaction likely initiates the recruitment of replication complexes to lipid droplets (By similarity). Interacts with host STING; this interaction disrupts the interaction between STING and TBK1 thereby suppressing the interferon signaling (By similarity). Part of the replication complex composed of NS2, NS3, NS4A, NS4B, NS5A and the RNA-directed RNA polymerase embedded in an ER-derived membranous web (By similarity).</text>
</comment>
<comment type="subunit">
    <molecule>Non-structural protein 5A</molecule>
    <text evidence="2 3 4 5 11">Monomer. Homodimer; dimerization is required for RNA-binding (By similarity). Interacts with the mature core protein (By similarity). Interacts (via N-terminus) with non-structural protein 4A (By similarity). Interacts with non-structural protein 4B. Interacts (via region D2) with RNA-directed RNA polymerase (By similarity). Part of the viral assembly initiation complex composed of NS2, E1, E2, NS3, NS4A, NS5A and the mature core protein (By similarity). Part of the replication complex composed of NS2, NS3, NS4A, NS4B, NS5A and the RNA-directed RNA polymerase embedded in an ER-derived membranous web (By similarity). Interacts with host GRB2 (By similarity). Interacts with host BIN1 (By similarity). Interacts with host PIK3R1 (By similarity). Interacts with host SRCAP (By similarity). Interacts with host FKBP8 (By similarity). Interacts (via C-terminus) with host VAPB (via MSP domain). Interacts with host EIF2AK2/PKR; this interaction leads to disruption of EIF2AK2 dimerization by NS5A and probably allows the virus to evade the innate immune response. Interacts (via N-terminus) with host PACSIN2 (via N-terminus); this interaction attenuates protein kinase C alpha-mediated phosphorylation of PACSIN2 by disrupting the interaction between PACSIN2 and PRKCA (By similarity). Interacts (via N-terminus) with host SRC kinase (via SH2 domain) (By similarity). Interacts with most Src-family kinases (By similarity). Interacts with host IFI27 and SKP2; promotes the ubiquitin-mediated proteasomal degradation of NS5A (By similarity). Interacts with host GPS2 (By similarity). Interacts with host TNFRSF21; this interaction allows the modulation by the virus of JNK, p38 MAPK, STAT3, and Akt signaling pathways in a DR6-dependent manner. Interacts (via N-terminus) with host CIDEB (via N-terminus); this interaction seems to regulate the association of HCV particles with APOE (By similarity). Interacts with host CHKA/Choline Kinase-alpha; CHKA bridges host PI4KA and NS5A and potentiates NS5A-stimulated PI4KA activity, which then facilitates the targeting of the ternary complex to the ER for viral replication (By similarity). Interacts with host SPSB2 (via C-terminus); this interaction targets NS5A for ubiquitination and degradation (By similarity). Interacts with host RAB18; this interaction may promote the association of NS5A and other replicase components with lipid droplets (By similarity). Interacts (via region D2) with host PPIA/CYPA; the interaction stimulates RNA-binding ability of NS5A and is dependent on the peptidyl-prolyl cis-trans isomerase activity of PPIA/CYPA. Interacts with host TRIM14; this interaction induces the degradation of NS5A (By similarity).</text>
</comment>
<comment type="subunit">
    <molecule>RNA-directed RNA polymerase</molecule>
    <text evidence="5">Homooligomer (By similarity). Interacts with non-structural protein 5A (By similarity). Interacts with host VAPB (By similarity). Interacts with host PRK2/PKN2 (By similarity). Interacts with host HNRNPA1 and SEPT6; these interactions facilitate viral replication (By similarity). Part of the replication complex composed of NS2, NS3, NS4A, NS4B, NS5A and the RNA-directed RNA polymerase (By similarity).</text>
</comment>
<comment type="subcellular location">
    <molecule>Core protein precursor</molecule>
    <subcellularLocation>
        <location evidence="4">Host endoplasmic reticulum membrane</location>
        <topology evidence="13">Single-pass membrane protein</topology>
    </subcellularLocation>
    <subcellularLocation>
        <location evidence="4">Host mitochondrion membrane</location>
        <topology evidence="13">Single-pass type I membrane protein</topology>
    </subcellularLocation>
    <text>The C-terminal transmembrane domain of the core protein precursor contains an ER signal leading the nascent polyprotein to the ER membrane.</text>
</comment>
<comment type="subcellular location">
    <molecule>Mature core protein</molecule>
    <subcellularLocation>
        <location evidence="11">Virion</location>
    </subcellularLocation>
    <subcellularLocation>
        <location evidence="11">Host cytoplasm</location>
    </subcellularLocation>
    <subcellularLocation>
        <location evidence="2">Host nucleus</location>
    </subcellularLocation>
    <subcellularLocation>
        <location evidence="11">Host lipid droplet</location>
    </subcellularLocation>
    <text evidence="5">Only a minor proportion of core protein is present in the nucleus (By similarity). Probably present on the surface of lipid droplets (By similarity).</text>
</comment>
<comment type="subcellular location">
    <molecule>Envelope glycoprotein E1</molecule>
    <subcellularLocation>
        <location evidence="20">Virion membrane</location>
        <topology evidence="20">Single-pass type I membrane protein</topology>
    </subcellularLocation>
    <subcellularLocation>
        <location>Host endoplasmic reticulum membrane</location>
        <topology evidence="5">Single-pass type I membrane protein</topology>
    </subcellularLocation>
    <text evidence="5">The C-terminal transmembrane domain acts as a signal sequence and forms a hairpin structure before cleavage by host signal peptidase (By similarity). After cleavage, the membrane sequence is retained at the C-terminus of the protein, serving as ER membrane anchor (By similarity). A reorientation of the second hydrophobic stretch occurs after cleavage producing a single reoriented transmembrane domain (By similarity). These events explain the final topology of the protein (By similarity).</text>
</comment>
<comment type="subcellular location">
    <molecule>Envelope glycoprotein E2</molecule>
    <subcellularLocation>
        <location evidence="20">Virion membrane</location>
        <topology evidence="20">Single-pass type I membrane protein</topology>
    </subcellularLocation>
    <subcellularLocation>
        <location>Host endoplasmic reticulum membrane</location>
        <topology evidence="5">Single-pass type I membrane protein</topology>
    </subcellularLocation>
    <subcellularLocation>
        <location evidence="12">Host lipid droplet</location>
    </subcellularLocation>
    <text evidence="5">The C-terminal transmembrane domain acts as a signal sequence and forms a hairpin structure before cleavage by host signal peptidase (By similarity). After cleavage, the membrane sequence is retained at the C-terminus of the protein, serving as ER membrane anchor (By similarity). A reorientation of the second hydrophobic stretch occurs after cleavage producing a single reoriented transmembrane domain (By similarity). These events explain the final topology of the protein (By similarity).</text>
</comment>
<comment type="subcellular location">
    <molecule>Viroporin p7</molecule>
    <subcellularLocation>
        <location evidence="5">Host endoplasmic reticulum membrane</location>
        <topology evidence="5">Multi-pass membrane protein</topology>
    </subcellularLocation>
    <subcellularLocation>
        <location evidence="5">Host mitochondrion</location>
    </subcellularLocation>
    <subcellularLocation>
        <location evidence="5">Host cell membrane</location>
    </subcellularLocation>
    <text evidence="5">The C-terminus of p7 membrane domain acts as a signal sequence (By similarity). After cleavage by host signal peptidase, the membrane sequence is retained at the C-terminus of the protein, serving as ER membrane anchor (By similarity). ER retention of p7 is leaky and a small fraction reaches the plasma membrane (By similarity).</text>
</comment>
<comment type="subcellular location">
    <molecule>Protease NS2</molecule>
    <subcellularLocation>
        <location evidence="5">Host endoplasmic reticulum membrane</location>
        <topology evidence="5">Multi-pass membrane protein</topology>
    </subcellularLocation>
    <subcellularLocation>
        <location evidence="12">Host lipid droplet</location>
    </subcellularLocation>
    <text evidence="11">Probably present on the surface of lipid droplets.</text>
</comment>
<comment type="subcellular location">
    <molecule>Serine protease/helicase NS3</molecule>
    <subcellularLocation>
        <location evidence="20">Host endoplasmic reticulum membrane</location>
        <topology evidence="20">Peripheral membrane protein</topology>
    </subcellularLocation>
    <text evidence="20">NS3 is associated to the ER membrane through its binding to NS4A.</text>
</comment>
<comment type="subcellular location">
    <molecule>Non-structural protein 4A</molecule>
    <subcellularLocation>
        <location evidence="20">Host endoplasmic reticulum membrane</location>
        <topology evidence="20">Single-pass type I membrane protein</topology>
    </subcellularLocation>
    <text>Host membrane insertion occurs after processing by the NS3 protease.</text>
</comment>
<comment type="subcellular location">
    <molecule>Non-structural protein 4B</molecule>
    <subcellularLocation>
        <location evidence="5">Host endoplasmic reticulum membrane</location>
        <topology evidence="5">Multi-pass membrane protein</topology>
    </subcellularLocation>
    <text evidence="5">A reorientation of the N-terminus into the ER lumen occurs post-translationally.</text>
</comment>
<comment type="subcellular location">
    <molecule>Non-structural protein 5A</molecule>
    <subcellularLocation>
        <location evidence="5">Host endoplasmic reticulum membrane</location>
        <topology evidence="5">Peripheral membrane protein</topology>
    </subcellularLocation>
    <subcellularLocation>
        <location evidence="5">Host cytoplasm</location>
        <location evidence="5">Host perinuclear region</location>
    </subcellularLocation>
    <subcellularLocation>
        <location evidence="2">Host mitochondrion</location>
    </subcellularLocation>
    <subcellularLocation>
        <location evidence="5">Host cytoplasm</location>
    </subcellularLocation>
    <subcellularLocation>
        <location evidence="2">Host nucleus</location>
    </subcellularLocation>
    <subcellularLocation>
        <location evidence="12">Host lipid droplet</location>
    </subcellularLocation>
    <text evidence="2 5">Host membrane insertion occurs after processing by the NS3 protease (By similarity). Localizes at the surface of lipid droplets (By similarity).</text>
</comment>
<comment type="subcellular location">
    <molecule>RNA-directed RNA polymerase</molecule>
    <subcellularLocation>
        <location evidence="5">Host cytoplasm</location>
    </subcellularLocation>
    <subcellularLocation>
        <location>Host endoplasmic reticulum membrane</location>
        <topology evidence="5">Single-pass type IV membrane protein</topology>
    </subcellularLocation>
    <text evidence="5">Host membrane insertion occurs after processing by the NS3 protease.</text>
</comment>
<comment type="domain">
    <molecule>Envelope glycoprotein E1</molecule>
    <text evidence="5">The transmembrane regions of envelope E1 and E2 glycoproteins are involved in heterodimer formation, ER localization, and assembly of these proteins.</text>
</comment>
<comment type="domain">
    <molecule>Envelope glycoprotein E2</molecule>
    <text evidence="3 5">The transmembrane regions of envelope E1 and E2 glycoproteins are involved in heterodimer formation, ER localization, and assembly of these proteins (By similarity). Envelope E2 glycoprotein contain two highly variable regions called hypervariable region 1 and 2 (HVR1 and HVR2) (By similarity). E2 also contain two segments involved in CD81-binding (By similarity). HVR1 is implicated in the SCARB1-mediated cell entry and probably acts as a regulator of the association of particles with lipids (By similarity).</text>
</comment>
<comment type="domain">
    <molecule>Protease NS2</molecule>
    <text evidence="3">The N-terminus of NS3 is required for the catalytic activity of protease NS2 (By similarity). The minimal catalytic region includes the C-terminus of NS2 and the N-terminus NS3 protease domain (active region NS2-3) (By similarity).</text>
</comment>
<comment type="domain">
    <molecule>Serine protease/helicase NS3</molecule>
    <text evidence="2 5">The N-terminal one-third contains the protease activity (By similarity). This region contains a zinc atom that does not belong to the active site, but may play a structural rather than a catalytic role (By similarity). This region is essential for the activity of protease NS2, maybe by contributing to the folding of the latter (By similarity). The NTPase/helicase activity is located in the twothirds C-terminus of NS3, this domain contains the NTPase and RNA-binding regions (By similarity).</text>
</comment>
<comment type="domain">
    <molecule>Non-structural protein 4B</molecule>
    <text evidence="11">Contains a glycine zipper region that critically contributes to the biogenesis of functional ER-derived replication organelles.</text>
</comment>
<comment type="domain">
    <molecule>Non-structural protein 5A</molecule>
    <text evidence="2 5">The N-terminus of NS5A acts as membrane anchor (By similarity). The central part of NS5A contains a variable region called interferon sensitivity determining region (ISDR) and seems to be intrinsically disordered and interacts with NS5B and host EIF2AK2 (By similarity). The C-terminus of NS5A contains a variable region called variable region 3 (V3) (By similarity). ISDR and V3 may be involved in sensitivity and/or resistance to IFN-alpha therapy (By similarity). The C-terminus contains a nuclear localization signal (By similarity). The SH3-binding domain is involved in the interaction with host BIN1, GRB2 and Src-family kinases (By similarity).</text>
</comment>
<comment type="PTM">
    <molecule>Genome polyprotein</molecule>
    <text evidence="4 5">Specific enzymatic cleavages in vivo yield mature proteins (By similarity). The structural proteins, core, E1, E2 and p7 are produced by proteolytic processing by host signal peptidases (By similarity). The core protein precursor is synthesized as a 23 kDa, which is retained in the ER membrane through the hydrophobic signal peptide (By similarity). Cleavage by the signal peptidase releases the 21 kDa mature core protein (By similarity). The cleavage of the core protein precursor occurs between aminoacids 176 and 188 but the exact cleavage site is not known (By similarity). Some degraded forms of the core protein appear as well during the course of infection (By similarity). The other proteins (p7, NS2, NS3, NS4A, NS4B, NS5A and NS5B) are cleaved by the viral proteases (By similarity). Autoprocessing between NS2 and NS3 is mediated by the NS2 cysteine protease catalytic domain and regulated by the NS3 N-terminal domain (By similarity).</text>
</comment>
<comment type="PTM">
    <molecule>Mature core protein</molecule>
    <text evidence="7">Phosphorylated by host PKC and PKA.</text>
</comment>
<comment type="PTM">
    <molecule>Mature core protein</molecule>
    <text evidence="8">Ubiquitinated; mediated by UBE3A and leading to core protein subsequent proteasomal degradation.</text>
</comment>
<comment type="PTM">
    <molecule>Envelope glycoprotein E1</molecule>
    <text evidence="5">Highly N-glycosylated.</text>
</comment>
<comment type="PTM">
    <molecule>Envelope glycoprotein E2</molecule>
    <text evidence="5">Highly N-glycosylated.</text>
</comment>
<comment type="PTM">
    <molecule>Protease NS2</molecule>
    <text evidence="5">Palmitoylation is required for NS2/3 autoprocessing and E2 recruitment to membranes.</text>
</comment>
<comment type="PTM">
    <molecule>Non-structural protein 4B</molecule>
    <text evidence="5">Palmitoylated. This modification may play a role in its polymerization or in protein-protein interactions.</text>
</comment>
<comment type="PTM">
    <molecule>Non-structural protein 5A</molecule>
    <text evidence="2 4">Phosphorylated on serines in a basal form termed p56 (By similarity). p58 is a hyperphosphorylated form of p56 (By similarity). p56 and p58 coexist in the cell in roughly equivalent amounts (By similarity). Hyperphosphorylation is dependent on the presence of NS4A (By similarity). Host CSNK1A1/CKI-alpha or RPS6KB1 kinases may be responsible for NS5A phosphorylation (By similarity).</text>
</comment>
<comment type="PTM">
    <molecule>Non-structural protein 5A</molecule>
    <text evidence="11">Tyrosine phosphorylation is essential for the interaction with host SRC.</text>
</comment>
<comment type="PTM">
    <molecule>RNA-directed RNA polymerase</molecule>
    <text evidence="2">The N-terminus is phosphorylated by host PRK2/PKN2.</text>
</comment>
<comment type="miscellaneous">
    <text evidence="20">Viral particle assembly takes place at the surface of ER-derived membranes in close proximity to lipid droplets. NS2 associates with E1/E2 glycoproteins, NS3 and NS5A, which interacts with the viral RNA and core protein to promote genome encapsidation. The nucleocapsid buds at the ER membrane where E1/E2 glycoproteins are anchored and afterward associate with nascent lipid droplet to acquire APOE and APOC. Secretion of viral particles is probably regulated by viroporin p7.</text>
</comment>
<comment type="miscellaneous">
    <molecule>Non-structural protein 5A</molecule>
    <text evidence="20">Cell culture adaptation of the virus leads to mutations in NS5A, reducing its inhibitory effect on replication.</text>
</comment>
<comment type="miscellaneous">
    <molecule>Mature core protein</molecule>
    <text evidence="2">Exerts viral interference on hepatitis B virus when HCV and HBV coinfect the same cell, by suppressing HBV gene expression, RNA encapsidation and budding.</text>
</comment>
<comment type="similarity">
    <text evidence="20">Belongs to the hepacivirus polyprotein family.</text>
</comment>
<comment type="caution">
    <text evidence="20">The core gene probably also codes for alternative reading frame proteins (ARFPs). Many functions depicted for the core protein might belong to the ARFPs.</text>
</comment>
<reference key="1">
    <citation type="journal article" date="1994" name="J. Gen. Virol.">
        <title>Nucleotide sequence of hepatitis C virus (type 3b) isolated from a Japanese patient with chronic hepatitis C.</title>
        <authorList>
            <person name="Chayama K."/>
            <person name="Tsubota A."/>
            <person name="Koida I."/>
            <person name="Arase Y."/>
            <person name="Saitoh S."/>
            <person name="Ikeda K."/>
            <person name="Kumada H."/>
        </authorList>
    </citation>
    <scope>NUCLEOTIDE SEQUENCE [GENOMIC RNA]</scope>
</reference>
<reference key="2">
    <citation type="journal article" date="2000" name="J. Viral Hepat.">
        <title>Properties of the hepatitis C virus core protein: a structural protein that modulates cellular processes.</title>
        <authorList>
            <person name="McLauchlan J."/>
        </authorList>
    </citation>
    <scope>REVIEW</scope>
</reference>
<reference key="3">
    <citation type="journal article" date="2004" name="Hepatology">
        <title>Structural biology of hepatitis C virus.</title>
        <authorList>
            <person name="Penin F."/>
            <person name="Dubuisson J."/>
            <person name="Rey F.A."/>
            <person name="Moradpour D."/>
            <person name="Pawlotsky J.-M."/>
        </authorList>
    </citation>
    <scope>REVIEW</scope>
</reference>
<keyword id="KW-0007">Acetylation</keyword>
<keyword id="KW-1072">Activation of host autophagy by virus</keyword>
<keyword id="KW-0053">Apoptosis</keyword>
<keyword id="KW-0067">ATP-binding</keyword>
<keyword id="KW-0167">Capsid protein</keyword>
<keyword id="KW-1165">Clathrin-mediated endocytosis of virus by host</keyword>
<keyword id="KW-1015">Disulfide bond</keyword>
<keyword id="KW-1170">Fusion of virus membrane with host endosomal membrane</keyword>
<keyword id="KW-1168">Fusion of virus membrane with host membrane</keyword>
<keyword id="KW-1078">G1/S host cell cycle checkpoint dysregulation by virus</keyword>
<keyword id="KW-0325">Glycoprotein</keyword>
<keyword id="KW-0347">Helicase</keyword>
<keyword id="KW-1032">Host cell membrane</keyword>
<keyword id="KW-1035">Host cytoplasm</keyword>
<keyword id="KW-1038">Host endoplasmic reticulum</keyword>
<keyword id="KW-1041">Host lipid droplet</keyword>
<keyword id="KW-1043">Host membrane</keyword>
<keyword id="KW-1045">Host mitochondrion</keyword>
<keyword id="KW-1048">Host nucleus</keyword>
<keyword id="KW-0945">Host-virus interaction</keyword>
<keyword id="KW-0378">Hydrolase</keyword>
<keyword id="KW-1090">Inhibition of host innate immune response by virus</keyword>
<keyword id="KW-1114">Inhibition of host interferon signaling pathway by virus</keyword>
<keyword id="KW-1097">Inhibition of host MAVS by virus</keyword>
<keyword id="KW-1113">Inhibition of host RLR pathway by virus</keyword>
<keyword id="KW-1105">Inhibition of host STAT1 by virus</keyword>
<keyword id="KW-1110">Inhibition of host TRAFs by virus</keyword>
<keyword id="KW-0922">Interferon antiviral system evasion</keyword>
<keyword id="KW-0407">Ion channel</keyword>
<keyword id="KW-0406">Ion transport</keyword>
<keyword id="KW-1017">Isopeptide bond</keyword>
<keyword id="KW-0449">Lipoprotein</keyword>
<keyword id="KW-0460">Magnesium</keyword>
<keyword id="KW-0472">Membrane</keyword>
<keyword id="KW-0479">Metal-binding</keyword>
<keyword id="KW-1121">Modulation of host cell cycle by virus</keyword>
<keyword id="KW-0511">Multifunctional enzyme</keyword>
<keyword id="KW-0547">Nucleotide-binding</keyword>
<keyword id="KW-0548">Nucleotidyltransferase</keyword>
<keyword id="KW-0553">Oncogene</keyword>
<keyword id="KW-0564">Palmitate</keyword>
<keyword id="KW-0597">Phosphoprotein</keyword>
<keyword id="KW-0645">Protease</keyword>
<keyword id="KW-0687">Ribonucleoprotein</keyword>
<keyword id="KW-0694">RNA-binding</keyword>
<keyword id="KW-0696">RNA-directed RNA polymerase</keyword>
<keyword id="KW-0720">Serine protease</keyword>
<keyword id="KW-0729">SH3-binding</keyword>
<keyword id="KW-0788">Thiol protease</keyword>
<keyword id="KW-0804">Transcription</keyword>
<keyword id="KW-0805">Transcription regulation</keyword>
<keyword id="KW-0808">Transferase</keyword>
<keyword id="KW-0812">Transmembrane</keyword>
<keyword id="KW-1133">Transmembrane helix</keyword>
<keyword id="KW-0813">Transport</keyword>
<keyword id="KW-0832">Ubl conjugation</keyword>
<keyword id="KW-1161">Viral attachment to host cell</keyword>
<keyword id="KW-0261">Viral envelope protein</keyword>
<keyword id="KW-0899">Viral immunoevasion</keyword>
<keyword id="KW-1182">Viral ion channel</keyword>
<keyword id="KW-0543">Viral nucleoprotein</keyword>
<keyword id="KW-1162">Viral penetration into host cytoplasm</keyword>
<keyword id="KW-0693">Viral RNA replication</keyword>
<keyword id="KW-0946">Virion</keyword>
<keyword id="KW-1164">Virus endocytosis by host</keyword>
<keyword id="KW-1160">Virus entry into host cell</keyword>
<keyword id="KW-0862">Zinc</keyword>
<protein>
    <recommendedName>
        <fullName>Genome polyprotein</fullName>
    </recommendedName>
    <component>
        <recommendedName>
            <fullName>Core protein precursor</fullName>
        </recommendedName>
        <alternativeName>
            <fullName>Capsid protein C</fullName>
        </alternativeName>
        <alternativeName>
            <fullName>p23</fullName>
        </alternativeName>
    </component>
    <component>
        <recommendedName>
            <fullName>Mature core protein</fullName>
        </recommendedName>
        <alternativeName>
            <fullName>p21</fullName>
        </alternativeName>
    </component>
    <component>
        <recommendedName>
            <fullName>Envelope glycoprotein E1</fullName>
        </recommendedName>
        <alternativeName>
            <fullName>gp32</fullName>
        </alternativeName>
        <alternativeName>
            <fullName>gp35</fullName>
        </alternativeName>
    </component>
    <component>
        <recommendedName>
            <fullName>Envelope glycoprotein E2</fullName>
        </recommendedName>
        <alternativeName>
            <fullName>NS1</fullName>
        </alternativeName>
        <alternativeName>
            <fullName>gp68</fullName>
        </alternativeName>
        <alternativeName>
            <fullName>gp70</fullName>
        </alternativeName>
    </component>
    <component>
        <recommendedName>
            <fullName>Viroporin p7</fullName>
        </recommendedName>
    </component>
    <component>
        <recommendedName>
            <fullName>Protease NS2</fullName>
            <shortName>p23</shortName>
            <ecNumber evidence="3">3.4.22.-</ecNumber>
        </recommendedName>
        <alternativeName>
            <fullName>Non-structural protein 2</fullName>
            <shortName>NS2</shortName>
        </alternativeName>
    </component>
    <component>
        <recommendedName>
            <fullName>Serine protease/helicase NS3</fullName>
            <ecNumber evidence="5">3.4.21.98</ecNumber>
            <ecNumber evidence="5">3.6.1.15</ecNumber>
            <ecNumber evidence="5">3.6.4.13</ecNumber>
        </recommendedName>
        <alternativeName>
            <fullName>Hepacivirin</fullName>
        </alternativeName>
        <alternativeName>
            <fullName evidence="5">NS3 helicase</fullName>
        </alternativeName>
        <alternativeName>
            <fullName evidence="5">NS3 protease</fullName>
        </alternativeName>
        <alternativeName>
            <fullName>NS3P</fullName>
        </alternativeName>
        <alternativeName>
            <fullName>Viroporin p70</fullName>
        </alternativeName>
    </component>
    <component>
        <recommendedName>
            <fullName>Non-structural protein 4A</fullName>
            <shortName>NS4A</shortName>
        </recommendedName>
        <alternativeName>
            <fullName>p8</fullName>
        </alternativeName>
    </component>
    <component>
        <recommendedName>
            <fullName>Non-structural protein 4B</fullName>
            <shortName>NS4B</shortName>
        </recommendedName>
        <alternativeName>
            <fullName>p27</fullName>
        </alternativeName>
    </component>
    <component>
        <recommendedName>
            <fullName>Non-structural protein 5A</fullName>
            <shortName>NS5A</shortName>
        </recommendedName>
        <alternativeName>
            <fullName>p56/58</fullName>
        </alternativeName>
    </component>
    <component>
        <recommendedName>
            <fullName>RNA-directed RNA polymerase</fullName>
            <ecNumber evidence="5">2.7.7.48</ecNumber>
        </recommendedName>
        <alternativeName>
            <fullName>NS5B</fullName>
        </alternativeName>
        <alternativeName>
            <fullName>p68</fullName>
        </alternativeName>
    </component>
</protein>
<dbReference type="EC" id="3.4.22.-" evidence="3"/>
<dbReference type="EC" id="3.4.21.98" evidence="5"/>
<dbReference type="EC" id="3.6.1.15" evidence="5"/>
<dbReference type="EC" id="3.6.4.13" evidence="5"/>
<dbReference type="EC" id="2.7.7.48" evidence="5"/>
<dbReference type="EMBL" id="D49374">
    <property type="protein sequence ID" value="BAA08372.1"/>
    <property type="molecule type" value="Genomic_RNA"/>
</dbReference>
<dbReference type="SMR" id="Q81487"/>
<dbReference type="MEROPS" id="C18.001"/>
<dbReference type="euHCVdb" id="D49374"/>
<dbReference type="Proteomes" id="UP000007534">
    <property type="component" value="Genome"/>
</dbReference>
<dbReference type="GO" id="GO:0044167">
    <property type="term" value="C:host cell endoplasmic reticulum membrane"/>
    <property type="evidence" value="ECO:0007669"/>
    <property type="project" value="UniProtKB-SubCell"/>
</dbReference>
<dbReference type="GO" id="GO:0044186">
    <property type="term" value="C:host cell lipid droplet"/>
    <property type="evidence" value="ECO:0007669"/>
    <property type="project" value="UniProtKB-SubCell"/>
</dbReference>
<dbReference type="GO" id="GO:0044191">
    <property type="term" value="C:host cell mitochondrial membrane"/>
    <property type="evidence" value="ECO:0007669"/>
    <property type="project" value="UniProtKB-SubCell"/>
</dbReference>
<dbReference type="GO" id="GO:0042025">
    <property type="term" value="C:host cell nucleus"/>
    <property type="evidence" value="ECO:0007669"/>
    <property type="project" value="UniProtKB-SubCell"/>
</dbReference>
<dbReference type="GO" id="GO:0044220">
    <property type="term" value="C:host cell perinuclear region of cytoplasm"/>
    <property type="evidence" value="ECO:0007669"/>
    <property type="project" value="UniProtKB-SubCell"/>
</dbReference>
<dbReference type="GO" id="GO:0020002">
    <property type="term" value="C:host cell plasma membrane"/>
    <property type="evidence" value="ECO:0007669"/>
    <property type="project" value="UniProtKB-SubCell"/>
</dbReference>
<dbReference type="GO" id="GO:0016020">
    <property type="term" value="C:membrane"/>
    <property type="evidence" value="ECO:0007669"/>
    <property type="project" value="UniProtKB-KW"/>
</dbReference>
<dbReference type="GO" id="GO:1990904">
    <property type="term" value="C:ribonucleoprotein complex"/>
    <property type="evidence" value="ECO:0007669"/>
    <property type="project" value="UniProtKB-KW"/>
</dbReference>
<dbReference type="GO" id="GO:0019031">
    <property type="term" value="C:viral envelope"/>
    <property type="evidence" value="ECO:0007669"/>
    <property type="project" value="UniProtKB-KW"/>
</dbReference>
<dbReference type="GO" id="GO:0019013">
    <property type="term" value="C:viral nucleocapsid"/>
    <property type="evidence" value="ECO:0007669"/>
    <property type="project" value="UniProtKB-KW"/>
</dbReference>
<dbReference type="GO" id="GO:0055036">
    <property type="term" value="C:virion membrane"/>
    <property type="evidence" value="ECO:0007669"/>
    <property type="project" value="UniProtKB-SubCell"/>
</dbReference>
<dbReference type="GO" id="GO:0005524">
    <property type="term" value="F:ATP binding"/>
    <property type="evidence" value="ECO:0007669"/>
    <property type="project" value="UniProtKB-KW"/>
</dbReference>
<dbReference type="GO" id="GO:0016887">
    <property type="term" value="F:ATP hydrolysis activity"/>
    <property type="evidence" value="ECO:0007669"/>
    <property type="project" value="RHEA"/>
</dbReference>
<dbReference type="GO" id="GO:0015267">
    <property type="term" value="F:channel activity"/>
    <property type="evidence" value="ECO:0007669"/>
    <property type="project" value="UniProtKB-KW"/>
</dbReference>
<dbReference type="GO" id="GO:0004197">
    <property type="term" value="F:cysteine-type endopeptidase activity"/>
    <property type="evidence" value="ECO:0007669"/>
    <property type="project" value="InterPro"/>
</dbReference>
<dbReference type="GO" id="GO:0003723">
    <property type="term" value="F:RNA binding"/>
    <property type="evidence" value="ECO:0007669"/>
    <property type="project" value="UniProtKB-KW"/>
</dbReference>
<dbReference type="GO" id="GO:0003724">
    <property type="term" value="F:RNA helicase activity"/>
    <property type="evidence" value="ECO:0007669"/>
    <property type="project" value="UniProtKB-EC"/>
</dbReference>
<dbReference type="GO" id="GO:0003968">
    <property type="term" value="F:RNA-directed RNA polymerase activity"/>
    <property type="evidence" value="ECO:0007669"/>
    <property type="project" value="UniProtKB-KW"/>
</dbReference>
<dbReference type="GO" id="GO:0004252">
    <property type="term" value="F:serine-type endopeptidase activity"/>
    <property type="evidence" value="ECO:0007669"/>
    <property type="project" value="InterPro"/>
</dbReference>
<dbReference type="GO" id="GO:0017124">
    <property type="term" value="F:SH3 domain binding"/>
    <property type="evidence" value="ECO:0007669"/>
    <property type="project" value="UniProtKB-KW"/>
</dbReference>
<dbReference type="GO" id="GO:0005198">
    <property type="term" value="F:structural molecule activity"/>
    <property type="evidence" value="ECO:0007669"/>
    <property type="project" value="InterPro"/>
</dbReference>
<dbReference type="GO" id="GO:0008270">
    <property type="term" value="F:zinc ion binding"/>
    <property type="evidence" value="ECO:0007669"/>
    <property type="project" value="InterPro"/>
</dbReference>
<dbReference type="GO" id="GO:0075512">
    <property type="term" value="P:clathrin-dependent endocytosis of virus by host cell"/>
    <property type="evidence" value="ECO:0007669"/>
    <property type="project" value="UniProtKB-KW"/>
</dbReference>
<dbReference type="GO" id="GO:0039654">
    <property type="term" value="P:fusion of virus membrane with host endosome membrane"/>
    <property type="evidence" value="ECO:0007669"/>
    <property type="project" value="UniProtKB-KW"/>
</dbReference>
<dbReference type="GO" id="GO:0034220">
    <property type="term" value="P:monoatomic ion transmembrane transport"/>
    <property type="evidence" value="ECO:0007669"/>
    <property type="project" value="UniProtKB-KW"/>
</dbReference>
<dbReference type="GO" id="GO:0006508">
    <property type="term" value="P:proteolysis"/>
    <property type="evidence" value="ECO:0007669"/>
    <property type="project" value="UniProtKB-KW"/>
</dbReference>
<dbReference type="GO" id="GO:0039520">
    <property type="term" value="P:symbiont-mediated activation of host autophagy"/>
    <property type="evidence" value="ECO:0007669"/>
    <property type="project" value="UniProtKB-KW"/>
</dbReference>
<dbReference type="GO" id="GO:0039645">
    <property type="term" value="P:symbiont-mediated perturbation of host cell cycle G1/S transition checkpoint"/>
    <property type="evidence" value="ECO:0007669"/>
    <property type="project" value="UniProtKB-KW"/>
</dbReference>
<dbReference type="GO" id="GO:0039545">
    <property type="term" value="P:symbiont-mediated suppression of host cytoplasmic pattern recognition receptor signaling pathway via inhibition of MAVS activity"/>
    <property type="evidence" value="ECO:0007669"/>
    <property type="project" value="UniProtKB-KW"/>
</dbReference>
<dbReference type="GO" id="GO:0039563">
    <property type="term" value="P:symbiont-mediated suppression of host JAK-STAT cascade via inhibition of STAT1 activity"/>
    <property type="evidence" value="ECO:0007669"/>
    <property type="project" value="UniProtKB-KW"/>
</dbReference>
<dbReference type="GO" id="GO:0039527">
    <property type="term" value="P:symbiont-mediated suppression of host TRAF-mediated signal transduction"/>
    <property type="evidence" value="ECO:0007669"/>
    <property type="project" value="UniProtKB-KW"/>
</dbReference>
<dbReference type="GO" id="GO:0039502">
    <property type="term" value="P:symbiont-mediated suppression of host type I interferon-mediated signaling pathway"/>
    <property type="evidence" value="ECO:0007669"/>
    <property type="project" value="UniProtKB-KW"/>
</dbReference>
<dbReference type="GO" id="GO:0019087">
    <property type="term" value="P:symbiont-mediated transformation of host cell"/>
    <property type="evidence" value="ECO:0007669"/>
    <property type="project" value="InterPro"/>
</dbReference>
<dbReference type="GO" id="GO:0039694">
    <property type="term" value="P:viral RNA genome replication"/>
    <property type="evidence" value="ECO:0007669"/>
    <property type="project" value="InterPro"/>
</dbReference>
<dbReference type="GO" id="GO:0019062">
    <property type="term" value="P:virion attachment to host cell"/>
    <property type="evidence" value="ECO:0007669"/>
    <property type="project" value="UniProtKB-KW"/>
</dbReference>
<dbReference type="CDD" id="cd20903">
    <property type="entry name" value="HCV_p7"/>
    <property type="match status" value="1"/>
</dbReference>
<dbReference type="CDD" id="cd23202">
    <property type="entry name" value="Hepacivirus_RdRp"/>
    <property type="match status" value="1"/>
</dbReference>
<dbReference type="FunFam" id="3.30.160.890:FF:000001">
    <property type="entry name" value="Genome polyprotein"/>
    <property type="match status" value="1"/>
</dbReference>
<dbReference type="FunFam" id="3.30.70.270:FF:000015">
    <property type="entry name" value="Genome polyprotein"/>
    <property type="match status" value="1"/>
</dbReference>
<dbReference type="FunFam" id="3.40.50.300:FF:000557">
    <property type="entry name" value="Genome polyprotein"/>
    <property type="match status" value="1"/>
</dbReference>
<dbReference type="FunFam" id="3.40.50.300:FF:000717">
    <property type="entry name" value="Genome polyprotein"/>
    <property type="match status" value="1"/>
</dbReference>
<dbReference type="Gene3D" id="2.40.10.120">
    <property type="match status" value="1"/>
</dbReference>
<dbReference type="Gene3D" id="3.30.70.270">
    <property type="match status" value="2"/>
</dbReference>
<dbReference type="Gene3D" id="6.10.250.1610">
    <property type="match status" value="1"/>
</dbReference>
<dbReference type="Gene3D" id="6.10.250.1750">
    <property type="match status" value="1"/>
</dbReference>
<dbReference type="Gene3D" id="6.10.250.2920">
    <property type="match status" value="1"/>
</dbReference>
<dbReference type="Gene3D" id="2.20.25.210">
    <property type="entry name" value="Hepatitis C NS5A, domain 1B"/>
    <property type="match status" value="1"/>
</dbReference>
<dbReference type="Gene3D" id="4.10.710.10">
    <property type="entry name" value="Hepatitis C Virus Capsid Protein, Chain A"/>
    <property type="match status" value="1"/>
</dbReference>
<dbReference type="Gene3D" id="3.30.160.890">
    <property type="entry name" value="Hepatitis C virus envelope glycoprotein E1, chain C"/>
    <property type="match status" value="1"/>
</dbReference>
<dbReference type="Gene3D" id="2.30.30.710">
    <property type="entry name" value="Hepatitis C virus non-structural protein NS2, C-terminal domain"/>
    <property type="match status" value="1"/>
</dbReference>
<dbReference type="Gene3D" id="1.20.1280.150">
    <property type="entry name" value="Hepatitis C virus non-structural protein NS2, N-terminal domain"/>
    <property type="match status" value="1"/>
</dbReference>
<dbReference type="Gene3D" id="2.20.25.220">
    <property type="entry name" value="Hepatitis C virus NS5A, 1B domain"/>
    <property type="match status" value="1"/>
</dbReference>
<dbReference type="Gene3D" id="3.40.50.300">
    <property type="entry name" value="P-loop containing nucleotide triphosphate hydrolases"/>
    <property type="match status" value="2"/>
</dbReference>
<dbReference type="Gene3D" id="1.10.820.10">
    <property type="entry name" value="RNA Helicase Chain A , domain 3"/>
    <property type="match status" value="1"/>
</dbReference>
<dbReference type="Gene3D" id="2.40.10.10">
    <property type="entry name" value="Trypsin-like serine proteases"/>
    <property type="match status" value="1"/>
</dbReference>
<dbReference type="InterPro" id="IPR043502">
    <property type="entry name" value="DNA/RNA_pol_sf"/>
</dbReference>
<dbReference type="InterPro" id="IPR011492">
    <property type="entry name" value="Flavi_DEAD"/>
</dbReference>
<dbReference type="InterPro" id="IPR002521">
    <property type="entry name" value="HCV_Core_C"/>
</dbReference>
<dbReference type="InterPro" id="IPR044896">
    <property type="entry name" value="HCV_core_chain_A"/>
</dbReference>
<dbReference type="InterPro" id="IPR002522">
    <property type="entry name" value="HCV_core_N"/>
</dbReference>
<dbReference type="InterPro" id="IPR002519">
    <property type="entry name" value="HCV_Env"/>
</dbReference>
<dbReference type="InterPro" id="IPR002531">
    <property type="entry name" value="HCV_NS1"/>
</dbReference>
<dbReference type="InterPro" id="IPR002518">
    <property type="entry name" value="HCV_NS2"/>
</dbReference>
<dbReference type="InterPro" id="IPR042205">
    <property type="entry name" value="HCV_NS2_C"/>
</dbReference>
<dbReference type="InterPro" id="IPR042209">
    <property type="entry name" value="HCV_NS2_N"/>
</dbReference>
<dbReference type="InterPro" id="IPR000745">
    <property type="entry name" value="HCV_NS4a"/>
</dbReference>
<dbReference type="InterPro" id="IPR001490">
    <property type="entry name" value="HCV_NS4b"/>
</dbReference>
<dbReference type="InterPro" id="IPR002868">
    <property type="entry name" value="HCV_NS5a"/>
</dbReference>
<dbReference type="InterPro" id="IPR013192">
    <property type="entry name" value="HCV_NS5A_1a"/>
</dbReference>
<dbReference type="InterPro" id="IPR013193">
    <property type="entry name" value="HCV_NS5a_1B_dom"/>
</dbReference>
<dbReference type="InterPro" id="IPR038568">
    <property type="entry name" value="HCV_NS5A_1B_sf"/>
</dbReference>
<dbReference type="InterPro" id="IPR024350">
    <property type="entry name" value="HCV_NS5a_C"/>
</dbReference>
<dbReference type="InterPro" id="IPR049913">
    <property type="entry name" value="HCV_p7"/>
</dbReference>
<dbReference type="InterPro" id="IPR014001">
    <property type="entry name" value="Helicase_ATP-bd"/>
</dbReference>
<dbReference type="InterPro" id="IPR001650">
    <property type="entry name" value="Helicase_C-like"/>
</dbReference>
<dbReference type="InterPro" id="IPR004109">
    <property type="entry name" value="HepC_NS3_protease"/>
</dbReference>
<dbReference type="InterPro" id="IPR054175">
    <property type="entry name" value="NS3_helicase_C"/>
</dbReference>
<dbReference type="InterPro" id="IPR038170">
    <property type="entry name" value="NS5A_1a_sf"/>
</dbReference>
<dbReference type="InterPro" id="IPR027417">
    <property type="entry name" value="P-loop_NTPase"/>
</dbReference>
<dbReference type="InterPro" id="IPR009003">
    <property type="entry name" value="Peptidase_S1_PA"/>
</dbReference>
<dbReference type="InterPro" id="IPR043504">
    <property type="entry name" value="Peptidase_S1_PA_chymotrypsin"/>
</dbReference>
<dbReference type="InterPro" id="IPR043128">
    <property type="entry name" value="Rev_trsase/Diguanyl_cyclase"/>
</dbReference>
<dbReference type="InterPro" id="IPR007094">
    <property type="entry name" value="RNA-dir_pol_PSvirus"/>
</dbReference>
<dbReference type="InterPro" id="IPR002166">
    <property type="entry name" value="RNA_pol_HCV"/>
</dbReference>
<dbReference type="Pfam" id="PF07652">
    <property type="entry name" value="Flavi_DEAD"/>
    <property type="match status" value="1"/>
</dbReference>
<dbReference type="Pfam" id="PF01543">
    <property type="entry name" value="HCV_capsid"/>
    <property type="match status" value="1"/>
</dbReference>
<dbReference type="Pfam" id="PF01542">
    <property type="entry name" value="HCV_core"/>
    <property type="match status" value="1"/>
</dbReference>
<dbReference type="Pfam" id="PF01539">
    <property type="entry name" value="HCV_env"/>
    <property type="match status" value="1"/>
</dbReference>
<dbReference type="Pfam" id="PF01560">
    <property type="entry name" value="HCV_NS1"/>
    <property type="match status" value="1"/>
</dbReference>
<dbReference type="Pfam" id="PF01538">
    <property type="entry name" value="HCV_NS2"/>
    <property type="match status" value="1"/>
</dbReference>
<dbReference type="Pfam" id="PF01006">
    <property type="entry name" value="HCV_NS4a"/>
    <property type="match status" value="1"/>
</dbReference>
<dbReference type="Pfam" id="PF01001">
    <property type="entry name" value="HCV_NS4b"/>
    <property type="match status" value="1"/>
</dbReference>
<dbReference type="Pfam" id="PF01506">
    <property type="entry name" value="HCV_NS5a"/>
    <property type="match status" value="1"/>
</dbReference>
<dbReference type="Pfam" id="PF08300">
    <property type="entry name" value="HCV_NS5a_1a"/>
    <property type="match status" value="1"/>
</dbReference>
<dbReference type="Pfam" id="PF08301">
    <property type="entry name" value="HCV_NS5a_1b"/>
    <property type="match status" value="1"/>
</dbReference>
<dbReference type="Pfam" id="PF12941">
    <property type="entry name" value="HCV_NS5a_C"/>
    <property type="match status" value="1"/>
</dbReference>
<dbReference type="Pfam" id="PF22027">
    <property type="entry name" value="NS3_helicase_C"/>
    <property type="match status" value="1"/>
</dbReference>
<dbReference type="Pfam" id="PF02907">
    <property type="entry name" value="Peptidase_S29"/>
    <property type="match status" value="1"/>
</dbReference>
<dbReference type="Pfam" id="PF00998">
    <property type="entry name" value="RdRP_3"/>
    <property type="match status" value="1"/>
</dbReference>
<dbReference type="SMART" id="SM00487">
    <property type="entry name" value="DEXDc"/>
    <property type="match status" value="1"/>
</dbReference>
<dbReference type="SUPFAM" id="SSF56672">
    <property type="entry name" value="DNA/RNA polymerases"/>
    <property type="match status" value="1"/>
</dbReference>
<dbReference type="SUPFAM" id="SSF52540">
    <property type="entry name" value="P-loop containing nucleoside triphosphate hydrolases"/>
    <property type="match status" value="2"/>
</dbReference>
<dbReference type="SUPFAM" id="SSF50494">
    <property type="entry name" value="Trypsin-like serine proteases"/>
    <property type="match status" value="1"/>
</dbReference>
<dbReference type="PROSITE" id="PS51693">
    <property type="entry name" value="HCV_NS2_PRO"/>
    <property type="match status" value="1"/>
</dbReference>
<dbReference type="PROSITE" id="PS51192">
    <property type="entry name" value="HELICASE_ATP_BIND_1"/>
    <property type="match status" value="1"/>
</dbReference>
<dbReference type="PROSITE" id="PS51194">
    <property type="entry name" value="HELICASE_CTER"/>
    <property type="match status" value="1"/>
</dbReference>
<dbReference type="PROSITE" id="PS51822">
    <property type="entry name" value="HV_PV_NS3_PRO"/>
    <property type="match status" value="1"/>
</dbReference>
<dbReference type="PROSITE" id="PS50507">
    <property type="entry name" value="RDRP_SSRNA_POS"/>
    <property type="match status" value="1"/>
</dbReference>